<organism>
    <name type="scientific">Bat coronavirus HKU3</name>
    <name type="common">BtCoV</name>
    <name type="synonym">SARS-like coronavirus HKU3</name>
    <dbReference type="NCBI Taxonomy" id="442736"/>
    <lineage>
        <taxon>Viruses</taxon>
        <taxon>Riboviria</taxon>
        <taxon>Orthornavirae</taxon>
        <taxon>Pisuviricota</taxon>
        <taxon>Pisoniviricetes</taxon>
        <taxon>Nidovirales</taxon>
        <taxon>Cornidovirineae</taxon>
        <taxon>Coronaviridae</taxon>
        <taxon>Orthocoronavirinae</taxon>
        <taxon>Betacoronavirus</taxon>
        <taxon>Sarbecovirus</taxon>
        <taxon>Severe acute respiratory syndrome coronavirus</taxon>
    </lineage>
</organism>
<comment type="function">
    <text evidence="2">The replicase polyprotein of coronaviruses is a multifunctional protein: it contains the activities necessary for the transcription of negative stranded RNA, leader RNA, subgenomic mRNAs and progeny virion RNA as well as proteinases responsible for the cleavage of the polyprotein into functional products.</text>
</comment>
<comment type="function">
    <molecule>Host translation inhibitor nsp1</molecule>
    <text evidence="2">Inhibits host translation by interacting with the 40S ribosomal subunit. The nsp1-40S ribosome complex further induces an endonucleolytic cleavage near the 5'UTR of host mRNAs, targeting them for degradation. Viral mRNAs are not susceptible to nsp1-mediated endonucleolytic RNA cleavage thanks to the presence of a 5'-end leader sequence and are therefore protected from degradation. By suppressing host gene expression, nsp1 facilitates efficient viral gene expression in infected cells and evasion from host immune response.</text>
</comment>
<comment type="function">
    <molecule>Non-structural protein 2</molecule>
    <text evidence="2">May play a role in the modulation of host cell survival signaling pathway by interacting with host PHB and PHB2. Indeed, these two proteins play a role in maintaining the functional integrity of the mitochondria and protecting cells from various stresses.</text>
</comment>
<comment type="function">
    <molecule>Papain-like proteinase nsp3</molecule>
    <text evidence="2">Responsible for the cleavages located at the N-terminus of the replicase polyprotein. In addition, PL-PRO possesses a deubiquitinating/deISGylating activity and processes both 'Lys-48'- and 'Lys-63'-linked polyubiquitin chains from cellular substrates. Participates together with nsp4 in the assembly of virally-induced cytoplasmic double-membrane vesicles necessary for viral replication. Antagonizes innate immune induction of type I interferon by blocking the phosphorylation, dimerization and subsequent nuclear translocation of host IRF3. Also prevents host NF-kappa-B signaling.</text>
</comment>
<comment type="function">
    <molecule>Non-structural protein 4</molecule>
    <text evidence="2">Participates in the assembly of virally-induced cytoplasmic double-membrane vesicles necessary for viral replication.</text>
</comment>
<comment type="function">
    <molecule>3C-like proteinase nsp5</molecule>
    <text evidence="2 9">Cleaves the C-terminus of replicase polyprotein at 11 sites. Recognizes substrates containing the core sequence [ILMVF]-Q-|-[SGACN]. Also able to bind an ADP-ribose-1''-phosphate (ADRP).</text>
</comment>
<comment type="function">
    <molecule>Non-structural protein 6</molecule>
    <text evidence="2">Plays a role in the initial induction of autophagosomes from host endoplasmic reticulum. Later, limits the expansion of these phagosomes that are no longer able to deliver viral components to lysosomes.</text>
</comment>
<comment type="function">
    <molecule>Non-structural protein 7</molecule>
    <text evidence="2">Forms a hexadecamer with nsp8 (8 subunits of each) that may participate in viral replication by acting as a primase. Alternatively, may synthesize substantially longer products than oligonucleotide primers.</text>
</comment>
<comment type="function">
    <molecule>Non-structural protein 8</molecule>
    <text evidence="2">Forms a hexadecamer with nsp7 (8 subunits of each) that may participate in viral replication by acting as a primase. Alternatively, may synthesize substantially longer products than oligonucleotide primers.</text>
</comment>
<comment type="function">
    <molecule>Viral protein genome-linked nsp9</molecule>
    <text evidence="3">Forms a primer, NSP9-pU, which is utilized by the polymerase for the initiation of RNA chains. Interacts with ribosome signal recognition particle RNA (SRP). Together with NSP8, suppress protein integration into the cell membrane, thereby disrupting host immune defenses.</text>
</comment>
<comment type="function">
    <molecule>Non-structural protein 10</molecule>
    <text evidence="2">Plays a pivotal role in viral transcription by stimulating both nsp14 3'-5' exoribonuclease and nsp16 2'-O-methyltransferase activities. Therefore plays an essential role in viral mRNAs cap methylation.</text>
</comment>
<comment type="function">
    <molecule>RNA-directed RNA polymerase nsp12</molecule>
    <text evidence="3">RNA-directed RNA polymerase that catalyzes the transcription of viral genomic and subgenomic RNAs. Acts in complex with nsp7 and nsp8 to transcribe both the minus and positive strands of genomic RNA. The kinase-like NiRAN domain of NSP12 attaches one or more nucleotides to the amino terminus of NSP9, forming a covalent RNA-protein intermediate that serves as transcription/replication primer. Subgenomic RNAs (sgRNAs) are formed by discontinuous transcription: The polymerase has the ability to pause at transcription-regulating sequences (TRS) and jump to the leader TRS, resulting in a major deletion. This creates a series of subgenomic RNAs that are replicated, transcribed and translated. In addition, Nsp12 is a subunit of the viral RNA capping enzyme that catalyzes the RNA guanylyltransferase reaction for genomic and sub-genomic RNAs. Subsequently, the NiRAN domain transfers RNA to GDP, and forms the core cap structure GpppA-RNA.</text>
</comment>
<comment type="function">
    <molecule>Helicase nsp13</molecule>
    <text evidence="2">Multi-functional protein with a zinc-binding domain in N-terminus displaying RNA and DNA duplex-unwinding activities with 5' to 3' polarity. Activity of helicase is dependent on magnesium.</text>
</comment>
<comment type="function">
    <molecule>Guanine-N7 methyltransferase nsp14</molecule>
    <text evidence="2">Plays a role in viral RNA synthesis through two distinct activities. The N7-guanine methyltransferase activity plays a role in the formation of the cap structure GpppA-RNA. The proofreading exoribonuclease reduces the sensitivity of the virus to RNA mutagens during replication. This activity acts on both ssRNA and dsRNA in a 3'-5' direction.</text>
</comment>
<comment type="function">
    <molecule>Uridylate-specific endoribonuclease nsp15</molecule>
    <text evidence="2">Plays a role in viral transcription/replication and prevents the simultaneous activation of host cell dsRNA sensors, such as MDA5/IFIH1, OAS, and PKR (By similarity). Acts by degrading the 5'-polyuridines generated during replication of the poly(A) region of viral genomic and subgenomic RNAs. Catalyzes a two-step reaction in which a 2'3'-cyclic phosphate (2'3'-cP) is first generated by 2'-O transesterification, which is then hydrolyzed to a 3'-phosphate (3'-P) (By similarity). If not degraded, poly(U) RNA would hybridize with poly(A) RNA tails and activate host dsRNA sensors (By similarity).</text>
</comment>
<comment type="function">
    <molecule>2'-O-methyltransferase nsp16</molecule>
    <text evidence="2">Methyltransferase that mediates mRNA cap 2'-O-ribose methylation to the 5'-cap structure of viral mRNAs. N7-methyl guanosine cap is a prerequisite for binding of nsp16. Therefore plays an essential role in viral mRNAs cap methylation which is essential to evade immune system.</text>
</comment>
<comment type="catalytic activity">
    <molecule>RNA-directed RNA polymerase nsp12</molecule>
    <reaction evidence="8">
        <text>RNA(n) + a ribonucleoside 5'-triphosphate = RNA(n+1) + diphosphate</text>
        <dbReference type="Rhea" id="RHEA:21248"/>
        <dbReference type="Rhea" id="RHEA-COMP:14527"/>
        <dbReference type="Rhea" id="RHEA-COMP:17342"/>
        <dbReference type="ChEBI" id="CHEBI:33019"/>
        <dbReference type="ChEBI" id="CHEBI:61557"/>
        <dbReference type="ChEBI" id="CHEBI:140395"/>
        <dbReference type="EC" id="2.7.7.48"/>
    </reaction>
</comment>
<comment type="catalytic activity">
    <molecule>Helicase nsp13</molecule>
    <reaction>
        <text>ATP + H2O = ADP + phosphate + H(+)</text>
        <dbReference type="Rhea" id="RHEA:13065"/>
        <dbReference type="ChEBI" id="CHEBI:15377"/>
        <dbReference type="ChEBI" id="CHEBI:15378"/>
        <dbReference type="ChEBI" id="CHEBI:30616"/>
        <dbReference type="ChEBI" id="CHEBI:43474"/>
        <dbReference type="ChEBI" id="CHEBI:456216"/>
        <dbReference type="EC" id="3.6.4.12"/>
    </reaction>
</comment>
<comment type="catalytic activity">
    <molecule>Helicase nsp13</molecule>
    <reaction>
        <text>ATP + H2O = ADP + phosphate + H(+)</text>
        <dbReference type="Rhea" id="RHEA:13065"/>
        <dbReference type="ChEBI" id="CHEBI:15377"/>
        <dbReference type="ChEBI" id="CHEBI:15378"/>
        <dbReference type="ChEBI" id="CHEBI:30616"/>
        <dbReference type="ChEBI" id="CHEBI:43474"/>
        <dbReference type="ChEBI" id="CHEBI:456216"/>
        <dbReference type="EC" id="3.6.4.13"/>
    </reaction>
</comment>
<comment type="catalytic activity">
    <molecule>Papain-like proteinase nsp3</molecule>
    <reaction>
        <text>Thiol-dependent hydrolysis of ester, thioester, amide, peptide and isopeptide bonds formed by the C-terminal Gly of ubiquitin (a 76-residue protein attached to proteins as an intracellular targeting signal).</text>
        <dbReference type="EC" id="3.4.19.12"/>
    </reaction>
</comment>
<comment type="catalytic activity">
    <molecule>2'-O-methyltransferase nsp16</molecule>
    <reaction evidence="2">
        <text>a 5'-end (N(7)-methyl 5'-triphosphoguanosine)-ribonucleoside in mRNA + S-adenosyl-L-methionine = a 5'-end (N(7)-methyl 5'-triphosphoguanosine)-(2'-O-methyl-ribonucleoside) in mRNA + S-adenosyl-L-homocysteine + H(+)</text>
        <dbReference type="Rhea" id="RHEA:67020"/>
        <dbReference type="Rhea" id="RHEA-COMP:17167"/>
        <dbReference type="Rhea" id="RHEA-COMP:17168"/>
        <dbReference type="ChEBI" id="CHEBI:15378"/>
        <dbReference type="ChEBI" id="CHEBI:57856"/>
        <dbReference type="ChEBI" id="CHEBI:59789"/>
        <dbReference type="ChEBI" id="CHEBI:156461"/>
        <dbReference type="ChEBI" id="CHEBI:167609"/>
        <dbReference type="EC" id="2.1.1.57"/>
    </reaction>
</comment>
<comment type="catalytic activity">
    <molecule>Uridylate-specific endoribonuclease nsp15</molecule>
    <reaction evidence="2">
        <text>uridylyl-uridylyl-ribonucleotide-RNA = a 3'-end uridylyl-2',3'-cyclophospho-uridine-RNA + a 5'-end dephospho-ribonucleoside-RNA</text>
        <dbReference type="Rhea" id="RHEA:67732"/>
        <dbReference type="Rhea" id="RHEA-COMP:13936"/>
        <dbReference type="Rhea" id="RHEA-COMP:17334"/>
        <dbReference type="Rhea" id="RHEA-COMP:17335"/>
        <dbReference type="ChEBI" id="CHEBI:138284"/>
        <dbReference type="ChEBI" id="CHEBI:173079"/>
        <dbReference type="ChEBI" id="CHEBI:173080"/>
    </reaction>
</comment>
<comment type="catalytic activity">
    <molecule>RNA-directed RNA polymerase nsp12</molecule>
    <reaction evidence="3">
        <text>a 5'-end diphospho-ribonucleoside in mRNA + GTP + H(+) = a 5'-end (5'-triphosphoguanosine)-ribonucleoside in mRNA + diphosphate</text>
        <dbReference type="Rhea" id="RHEA:67012"/>
        <dbReference type="Rhea" id="RHEA-COMP:17165"/>
        <dbReference type="Rhea" id="RHEA-COMP:17166"/>
        <dbReference type="ChEBI" id="CHEBI:15378"/>
        <dbReference type="ChEBI" id="CHEBI:33019"/>
        <dbReference type="ChEBI" id="CHEBI:37565"/>
        <dbReference type="ChEBI" id="CHEBI:167616"/>
        <dbReference type="ChEBI" id="CHEBI:167617"/>
        <dbReference type="EC" id="2.7.7.50"/>
    </reaction>
    <physiologicalReaction direction="left-to-right" evidence="3">
        <dbReference type="Rhea" id="RHEA:67013"/>
    </physiologicalReaction>
</comment>
<comment type="catalytic activity">
    <molecule>Guanine-N7 methyltransferase nsp14</molecule>
    <reaction evidence="2">
        <text>a 5'-end (5'-triphosphoguanosine)-ribonucleoside in mRNA + S-adenosyl-L-methionine = a 5'-end (N(7)-methyl 5'-triphosphoguanosine)-ribonucleoside in mRNA + S-adenosyl-L-homocysteine</text>
        <dbReference type="Rhea" id="RHEA:67008"/>
        <dbReference type="Rhea" id="RHEA-COMP:17166"/>
        <dbReference type="Rhea" id="RHEA-COMP:17167"/>
        <dbReference type="ChEBI" id="CHEBI:57856"/>
        <dbReference type="ChEBI" id="CHEBI:59789"/>
        <dbReference type="ChEBI" id="CHEBI:156461"/>
        <dbReference type="ChEBI" id="CHEBI:167617"/>
        <dbReference type="EC" id="2.1.1.56"/>
    </reaction>
    <physiologicalReaction direction="left-to-right" evidence="2">
        <dbReference type="Rhea" id="RHEA:67009"/>
    </physiologicalReaction>
</comment>
<comment type="cofactor">
    <molecule>Uridylate-specific endoribonuclease nsp15</molecule>
    <cofactor evidence="2">
        <name>Mn(2+)</name>
        <dbReference type="ChEBI" id="CHEBI:29035"/>
    </cofactor>
    <text evidence="2">Likely affects Nsp15 binding to RNA.</text>
</comment>
<comment type="cofactor">
    <molecule>RNA-directed RNA polymerase nsp12</molecule>
    <cofactor evidence="3">
        <name>Mg(2+)</name>
        <dbReference type="ChEBI" id="CHEBI:18420"/>
    </cofactor>
</comment>
<comment type="subunit">
    <molecule>Non-structural protein 2</molecule>
    <text evidence="2">Interacts with host PHB and PHB2.</text>
</comment>
<comment type="subunit">
    <molecule>Non-structural protein 4</molecule>
    <text evidence="2">Interacts with papain-like protease nsp3 and non-structural protein 6.</text>
</comment>
<comment type="subunit">
    <molecule>3C-like proteinase nsp5</molecule>
    <text evidence="2">Monomer. Homodimer. Only the homodimer shows catalytic activity.</text>
</comment>
<comment type="subunit">
    <molecule>Non-structural protein 7</molecule>
    <text evidence="3">Interacts with nsp8 and nsp12 to form the replication-transcription complex (RTC): nsp12, nsp7, two subunits of nsp8, and up to two subunits of nsp13.</text>
</comment>
<comment type="subunit">
    <molecule>Non-structural protein 8</molecule>
    <text evidence="3">Interacts with nsp7, nsp13 and nsp12 to form the replication-transcription complex (RTC): nsp12, nsp7, two subunits of nsp8, and up to two subunits of nsp13.</text>
</comment>
<comment type="subunit">
    <molecule>Viral protein genome-linked nsp9</molecule>
    <text evidence="3">Interacts with nsp12.</text>
</comment>
<comment type="subunit">
    <molecule>Non-structural protein 10</molecule>
    <text evidence="3">Interacts with proofreading exoribonuclease nsp14 and 2'-O-methyltransferase nsp16; these interactions enhance nsp14 and nsp16 enzymatic activities.</text>
</comment>
<comment type="subunit">
    <molecule>RNA-directed RNA polymerase nsp12</molecule>
    <text evidence="3">Interacts with nsp7 and nsp8 to form the replication-transcription complex (RTC): nsp12, nsp7, two subunits of nsp8, and up to two subunits of nsp13. Interacts with nsp9.</text>
</comment>
<comment type="subunit">
    <molecule>Helicase nsp13</molecule>
    <text evidence="3">Interacts with nsp8 to form the replication-transcription complex (RTC): nsp12, nsp7, two subunits of nsp8, and up to two subunits of nsp13.</text>
</comment>
<comment type="subcellular location">
    <molecule>Papain-like proteinase nsp3</molecule>
    <subcellularLocation>
        <location>Host membrane</location>
        <topology>Multi-pass membrane protein</topology>
    </subcellularLocation>
    <subcellularLocation>
        <location evidence="2">Host cytoplasm</location>
    </subcellularLocation>
</comment>
<comment type="subcellular location">
    <molecule>Non-structural protein 4</molecule>
    <subcellularLocation>
        <location>Host membrane</location>
        <topology>Multi-pass membrane protein</topology>
    </subcellularLocation>
    <subcellularLocation>
        <location>Host cytoplasm</location>
    </subcellularLocation>
    <text evidence="2">Localizes in virally-induced cytoplasmic double-membrane vesicles.</text>
</comment>
<comment type="subcellular location">
    <molecule>Non-structural protein 6</molecule>
    <subcellularLocation>
        <location evidence="35">Host membrane</location>
        <topology evidence="35">Multi-pass membrane protein</topology>
    </subcellularLocation>
</comment>
<comment type="subcellular location">
    <molecule>Non-structural protein 7</molecule>
    <subcellularLocation>
        <location evidence="1">Host cytoplasm</location>
        <location evidence="1">Host perinuclear region</location>
    </subcellularLocation>
    <text evidence="1">nsp7, nsp8, nsp9 and nsp10 are localized in cytoplasmic foci, largely perinuclear. Late in infection, they merge into confluent complexes (By similarity).</text>
</comment>
<comment type="subcellular location">
    <molecule>Non-structural protein 8</molecule>
    <subcellularLocation>
        <location evidence="1">Host cytoplasm</location>
        <location evidence="1">Host perinuclear region</location>
    </subcellularLocation>
    <text evidence="1">nsp7, nsp8, nsp9 and nsp10 are localized in cytoplasmic foci, largely perinuclear. Late in infection, they merge into confluent complexes (By similarity).</text>
</comment>
<comment type="subcellular location">
    <molecule>Viral protein genome-linked nsp9</molecule>
    <subcellularLocation>
        <location evidence="1">Host cytoplasm</location>
        <location evidence="1">Host perinuclear region</location>
    </subcellularLocation>
    <text evidence="1">nsp7, nsp8, nsp9 and nsp10 are localized in cytoplasmic foci, largely perinuclear. Late in infection, they merge into confluent complexes (By similarity).</text>
</comment>
<comment type="subcellular location">
    <molecule>Non-structural protein 10</molecule>
    <subcellularLocation>
        <location evidence="1">Host cytoplasm</location>
        <location evidence="1">Host perinuclear region</location>
    </subcellularLocation>
    <text evidence="1">nsp7, nsp8, nsp9 and nsp10 are localized in cytoplasmic foci, largely perinuclear. Late in infection, they merge into confluent complexes (By similarity).</text>
</comment>
<comment type="subcellular location">
    <molecule>Helicase nsp13</molecule>
    <subcellularLocation>
        <location evidence="35">Host endoplasmic reticulum-Golgi intermediate compartment</location>
    </subcellularLocation>
    <text evidence="1">The helicase interacts with the N protein in membranous complexes and colocalizes with sites of synthesis of new viral RNA.</text>
</comment>
<comment type="subcellular location">
    <molecule>Uridylate-specific endoribonuclease nsp15</molecule>
    <subcellularLocation>
        <location evidence="1">Host cytoplasm</location>
        <location evidence="1">Host perinuclear region</location>
    </subcellularLocation>
</comment>
<comment type="alternative products">
    <event type="ribosomal frameshifting"/>
    <isoform>
        <id>P0C6W2-1</id>
        <name>Replicase polyprotein 1ab</name>
        <name>pp1ab</name>
        <sequence type="displayed"/>
    </isoform>
    <isoform>
        <id>P0C6F8-1</id>
        <name>Replicase polyprotein 1a</name>
        <name>pp1a</name>
        <name>ORF1a polyprotein</name>
        <sequence type="external"/>
    </isoform>
</comment>
<comment type="domain">
    <text evidence="1">The hydrophobic domains (HD) could mediate the membrane association of the replication complex and thereby alter the architecture of the host cell membrane.</text>
</comment>
<comment type="PTM">
    <text evidence="1">Specific enzymatic cleavages in vivo by its own proteases yield mature proteins. 3CL-PRO and PL-PRO proteinases are autocatalytically processed (By similarity).</text>
</comment>
<comment type="miscellaneous">
    <text>Bat coronavirus HKU3 is highly similar to SARS-CoV (SARS-like).</text>
</comment>
<comment type="miscellaneous">
    <molecule>Isoform Replicase polyprotein 1ab</molecule>
    <text>Produced by -1 ribosomal frameshifting at the 1a-1b genes boundary.</text>
</comment>
<comment type="similarity">
    <text evidence="35">Belongs to the coronaviruses polyprotein 1ab family.</text>
</comment>
<evidence type="ECO:0000250" key="1"/>
<evidence type="ECO:0000250" key="2">
    <source>
        <dbReference type="UniProtKB" id="P0C6X7"/>
    </source>
</evidence>
<evidence type="ECO:0000250" key="3">
    <source>
        <dbReference type="UniProtKB" id="P0DTD1"/>
    </source>
</evidence>
<evidence type="ECO:0000255" key="4"/>
<evidence type="ECO:0000255" key="5">
    <source>
        <dbReference type="PROSITE-ProRule" id="PRU00214"/>
    </source>
</evidence>
<evidence type="ECO:0000255" key="6">
    <source>
        <dbReference type="PROSITE-ProRule" id="PRU00444"/>
    </source>
</evidence>
<evidence type="ECO:0000255" key="7">
    <source>
        <dbReference type="PROSITE-ProRule" id="PRU00490"/>
    </source>
</evidence>
<evidence type="ECO:0000255" key="8">
    <source>
        <dbReference type="PROSITE-ProRule" id="PRU00539"/>
    </source>
</evidence>
<evidence type="ECO:0000255" key="9">
    <source>
        <dbReference type="PROSITE-ProRule" id="PRU00772"/>
    </source>
</evidence>
<evidence type="ECO:0000255" key="10">
    <source>
        <dbReference type="PROSITE-ProRule" id="PRU00986"/>
    </source>
</evidence>
<evidence type="ECO:0000255" key="11">
    <source>
        <dbReference type="PROSITE-ProRule" id="PRU01289"/>
    </source>
</evidence>
<evidence type="ECO:0000255" key="12">
    <source>
        <dbReference type="PROSITE-ProRule" id="PRU01290"/>
    </source>
</evidence>
<evidence type="ECO:0000255" key="13">
    <source>
        <dbReference type="PROSITE-ProRule" id="PRU01291"/>
    </source>
</evidence>
<evidence type="ECO:0000255" key="14">
    <source>
        <dbReference type="PROSITE-ProRule" id="PRU01292"/>
    </source>
</evidence>
<evidence type="ECO:0000255" key="15">
    <source>
        <dbReference type="PROSITE-ProRule" id="PRU01293"/>
    </source>
</evidence>
<evidence type="ECO:0000255" key="16">
    <source>
        <dbReference type="PROSITE-ProRule" id="PRU01294"/>
    </source>
</evidence>
<evidence type="ECO:0000255" key="17">
    <source>
        <dbReference type="PROSITE-ProRule" id="PRU01295"/>
    </source>
</evidence>
<evidence type="ECO:0000255" key="18">
    <source>
        <dbReference type="PROSITE-ProRule" id="PRU01296"/>
    </source>
</evidence>
<evidence type="ECO:0000255" key="19">
    <source>
        <dbReference type="PROSITE-ProRule" id="PRU01297"/>
    </source>
</evidence>
<evidence type="ECO:0000255" key="20">
    <source>
        <dbReference type="PROSITE-ProRule" id="PRU01298"/>
    </source>
</evidence>
<evidence type="ECO:0000255" key="21">
    <source>
        <dbReference type="PROSITE-ProRule" id="PRU01299"/>
    </source>
</evidence>
<evidence type="ECO:0000255" key="22">
    <source>
        <dbReference type="PROSITE-ProRule" id="PRU01300"/>
    </source>
</evidence>
<evidence type="ECO:0000255" key="23">
    <source>
        <dbReference type="PROSITE-ProRule" id="PRU01303"/>
    </source>
</evidence>
<evidence type="ECO:0000255" key="24">
    <source>
        <dbReference type="PROSITE-ProRule" id="PRU01305"/>
    </source>
</evidence>
<evidence type="ECO:0000255" key="25">
    <source>
        <dbReference type="PROSITE-ProRule" id="PRU01306"/>
    </source>
</evidence>
<evidence type="ECO:0000255" key="26">
    <source>
        <dbReference type="PROSITE-ProRule" id="PRU01307"/>
    </source>
</evidence>
<evidence type="ECO:0000255" key="27">
    <source>
        <dbReference type="PROSITE-ProRule" id="PRU01308"/>
    </source>
</evidence>
<evidence type="ECO:0000255" key="28">
    <source>
        <dbReference type="PROSITE-ProRule" id="PRU01333"/>
    </source>
</evidence>
<evidence type="ECO:0000255" key="29">
    <source>
        <dbReference type="PROSITE-ProRule" id="PRU01334"/>
    </source>
</evidence>
<evidence type="ECO:0000255" key="30">
    <source>
        <dbReference type="PROSITE-ProRule" id="PRU01335"/>
    </source>
</evidence>
<evidence type="ECO:0000255" key="31">
    <source>
        <dbReference type="PROSITE-ProRule" id="PRU01336"/>
    </source>
</evidence>
<evidence type="ECO:0000255" key="32">
    <source>
        <dbReference type="PROSITE-ProRule" id="PRU01337"/>
    </source>
</evidence>
<evidence type="ECO:0000255" key="33">
    <source>
        <dbReference type="PROSITE-ProRule" id="PRU01338"/>
    </source>
</evidence>
<evidence type="ECO:0000255" key="34">
    <source>
        <dbReference type="PROSITE-ProRule" id="PRU01344"/>
    </source>
</evidence>
<evidence type="ECO:0000305" key="35"/>
<name>R1AB_BCHK3</name>
<feature type="chain" id="PRO_0000291335" description="Host translation inhibitor nsp1" evidence="2">
    <location>
        <begin position="1"/>
        <end position="179"/>
    </location>
</feature>
<feature type="chain" id="PRO_0000291336" description="Non-structural protein 2" evidence="2">
    <location>
        <begin position="180"/>
        <end position="818"/>
    </location>
</feature>
<feature type="chain" id="PRO_0000291337" description="Papain-like proteinase nsp3" evidence="2">
    <location>
        <begin position="819"/>
        <end position="2734"/>
    </location>
</feature>
<feature type="chain" id="PRO_0000291338" description="Non-structural protein 4" evidence="2">
    <location>
        <begin position="2735"/>
        <end position="3234"/>
    </location>
</feature>
<feature type="chain" id="PRO_0000291339" description="3C-like proteinase nsp5" evidence="2">
    <location>
        <begin position="3235"/>
        <end position="3540"/>
    </location>
</feature>
<feature type="chain" id="PRO_0000291340" description="Non-structural protein 6" evidence="2">
    <location>
        <begin position="3541"/>
        <end position="3830"/>
    </location>
</feature>
<feature type="chain" id="PRO_0000291341" description="Non-structural protein 7" evidence="2">
    <location>
        <begin position="3831"/>
        <end position="3913"/>
    </location>
</feature>
<feature type="chain" id="PRO_0000291342" description="Non-structural protein 8" evidence="2">
    <location>
        <begin position="3914"/>
        <end position="4111"/>
    </location>
</feature>
<feature type="chain" id="PRO_0000291343" description="Viral protein genome-linked nsp9" evidence="2">
    <location>
        <begin position="4112"/>
        <end position="4224"/>
    </location>
</feature>
<feature type="chain" id="PRO_0000291344" description="Non-structural protein 10" evidence="2">
    <location>
        <begin position="4225"/>
        <end position="4363"/>
    </location>
</feature>
<feature type="chain" id="PRO_0000291345" description="RNA-directed RNA polymerase nsp12" evidence="2">
    <location>
        <begin position="4364"/>
        <end position="5295"/>
    </location>
</feature>
<feature type="chain" id="PRO_0000291346" description="Helicase nsp13" evidence="2">
    <location>
        <begin position="5296"/>
        <end position="5896"/>
    </location>
</feature>
<feature type="chain" id="PRO_0000291347" description="Guanine-N7 methyltransferase nsp14" evidence="2">
    <location>
        <begin position="5897"/>
        <end position="6423"/>
    </location>
</feature>
<feature type="chain" id="PRO_0000291348" description="Uridylate-specific endoribonuclease nsp15" evidence="2">
    <location>
        <begin position="6424"/>
        <end position="6769"/>
    </location>
</feature>
<feature type="chain" id="PRO_0000291349" description="2'-O-methyltransferase nsp16" evidence="2">
    <location>
        <begin position="6770"/>
        <end position="7067"/>
    </location>
</feature>
<feature type="transmembrane region" description="Helical" evidence="4">
    <location>
        <begin position="2197"/>
        <end position="2217"/>
    </location>
</feature>
<feature type="transmembrane region" description="Helical" evidence="4">
    <location>
        <begin position="2298"/>
        <end position="2318"/>
    </location>
</feature>
<feature type="transmembrane region" description="Helical" evidence="4">
    <location>
        <begin position="2345"/>
        <end position="2365"/>
    </location>
</feature>
<feature type="transmembrane region" description="Helical" evidence="4">
    <location>
        <begin position="2744"/>
        <end position="2764"/>
    </location>
</feature>
<feature type="transmembrane region" description="Helical" evidence="4">
    <location>
        <begin position="2986"/>
        <end position="3006"/>
    </location>
</feature>
<feature type="transmembrane region" description="Helical" evidence="4">
    <location>
        <begin position="3016"/>
        <end position="3036"/>
    </location>
</feature>
<feature type="transmembrane region" description="Helical" evidence="4">
    <location>
        <begin position="3048"/>
        <end position="3068"/>
    </location>
</feature>
<feature type="transmembrane region" description="Helical" evidence="4">
    <location>
        <begin position="3071"/>
        <end position="3091"/>
    </location>
</feature>
<feature type="transmembrane region" description="Helical" evidence="4">
    <location>
        <begin position="3099"/>
        <end position="3119"/>
    </location>
</feature>
<feature type="transmembrane region" description="Helical" evidence="4">
    <location>
        <begin position="3136"/>
        <end position="3156"/>
    </location>
</feature>
<feature type="transmembrane region" description="Helical" evidence="4">
    <location>
        <begin position="3558"/>
        <end position="3578"/>
    </location>
</feature>
<feature type="transmembrane region" description="Helical" evidence="4">
    <location>
        <begin position="3580"/>
        <end position="3600"/>
    </location>
</feature>
<feature type="transmembrane region" description="Helical" evidence="4">
    <location>
        <begin position="3606"/>
        <end position="3626"/>
    </location>
</feature>
<feature type="transmembrane region" description="Helical" evidence="4">
    <location>
        <begin position="3652"/>
        <end position="3672"/>
    </location>
</feature>
<feature type="transmembrane region" description="Helical" evidence="4">
    <location>
        <begin position="3679"/>
        <end position="3698"/>
    </location>
</feature>
<feature type="transmembrane region" description="Helical" evidence="4">
    <location>
        <begin position="3722"/>
        <end position="3742"/>
    </location>
</feature>
<feature type="transmembrane region" description="Helical" evidence="4">
    <location>
        <begin position="3750"/>
        <end position="3770"/>
    </location>
</feature>
<feature type="domain" description="CoV Nsp1 globular" evidence="26">
    <location>
        <begin position="12"/>
        <end position="127"/>
    </location>
</feature>
<feature type="domain" description="BetaCoV Nsp1 C-terminal" evidence="27">
    <location>
        <begin position="148"/>
        <end position="179"/>
    </location>
</feature>
<feature type="domain" description="CoV Nsp2 N-terminal" evidence="28">
    <location>
        <begin position="183"/>
        <end position="456"/>
    </location>
</feature>
<feature type="domain" description="CoV Nsp2 middle" evidence="29">
    <location>
        <begin position="458"/>
        <end position="688"/>
    </location>
</feature>
<feature type="domain" description="CoV Nsp2 C-terminal" evidence="30">
    <location>
        <begin position="690"/>
        <end position="818"/>
    </location>
</feature>
<feature type="domain" description="Ubiquitin-like 1" evidence="5">
    <location>
        <begin position="822"/>
        <end position="930"/>
    </location>
</feature>
<feature type="domain" description="Macro 1" evidence="7">
    <location>
        <begin position="998"/>
        <end position="1164"/>
    </location>
</feature>
<feature type="domain" description="Macro 2" evidence="7">
    <location>
        <begin position="1201"/>
        <end position="1329"/>
    </location>
</feature>
<feature type="domain" description="Macro 3" evidence="7">
    <location>
        <begin position="1337"/>
        <end position="1464"/>
    </location>
</feature>
<feature type="domain" description="DPUP" evidence="11">
    <location>
        <begin position="1466"/>
        <end position="1532"/>
    </location>
</feature>
<feature type="domain" description="Ubiquitin-like 2" evidence="5">
    <location>
        <begin position="1536"/>
        <end position="1591"/>
    </location>
</feature>
<feature type="domain" description="Peptidase C16" evidence="6">
    <location>
        <begin position="1605"/>
        <end position="1869"/>
    </location>
</feature>
<feature type="domain" description="Nucleic acid-binding" evidence="12">
    <location>
        <begin position="1882"/>
        <end position="1992"/>
    </location>
</feature>
<feature type="domain" description="G2M" evidence="33">
    <location>
        <begin position="2017"/>
        <end position="2126"/>
    </location>
</feature>
<feature type="domain" description="3Ecto" evidence="32">
    <location>
        <begin position="2218"/>
        <end position="2288"/>
    </location>
</feature>
<feature type="domain" description="CoV Nsp3 Y" evidence="31">
    <location>
        <begin position="2366"/>
        <end position="2734"/>
    </location>
</feature>
<feature type="domain" description="Nsp4C" evidence="13">
    <location>
        <begin position="3136"/>
        <end position="3234"/>
    </location>
</feature>
<feature type="domain" description="Peptidase C30" evidence="9">
    <location>
        <begin position="3235"/>
        <end position="3540"/>
    </location>
</feature>
<feature type="domain" description="RdRp Nsp7 cofactor" evidence="16">
    <location>
        <begin position="3831"/>
        <end position="3913"/>
    </location>
</feature>
<feature type="domain" description="RdRp Nsp8 cofactor" evidence="17">
    <location>
        <begin position="3914"/>
        <end position="4111"/>
    </location>
</feature>
<feature type="domain" description="Nsp9 ssRNA-binding" evidence="18">
    <location>
        <begin position="4112"/>
        <end position="4224"/>
    </location>
</feature>
<feature type="domain" description="ExoN/MTase coactivator" evidence="19">
    <location>
        <begin position="4225"/>
        <end position="4363"/>
    </location>
</feature>
<feature type="domain" description="NiRAN" evidence="14">
    <location>
        <begin position="4370"/>
        <end position="4624"/>
    </location>
</feature>
<feature type="domain" description="Nsp12 Interface" evidence="34">
    <location>
        <begin position="4629"/>
        <end position="4727"/>
    </location>
</feature>
<feature type="domain" description="Nsp12 RNA-dependent RNA polymerase" evidence="15">
    <location>
        <begin position="4728"/>
        <end position="5295"/>
    </location>
</feature>
<feature type="domain" description="RdRp catalytic" evidence="8">
    <location>
        <begin position="4975"/>
        <end position="5137"/>
    </location>
</feature>
<feature type="domain" description="CV ZBD" evidence="10">
    <location>
        <begin position="5296"/>
        <end position="5408"/>
    </location>
</feature>
<feature type="domain" description="(+)RNA virus helicase ATP-binding">
    <location>
        <begin position="5552"/>
        <end position="5733"/>
    </location>
</feature>
<feature type="domain" description="(+)RNA virus helicase C-terminal">
    <location>
        <begin position="5734"/>
        <end position="5903"/>
    </location>
</feature>
<feature type="domain" description="ExoN" evidence="20">
    <location>
        <begin position="5968"/>
        <end position="6183"/>
    </location>
</feature>
<feature type="domain" description="N7-MTase" evidence="21">
    <location>
        <begin position="6192"/>
        <end position="6423"/>
    </location>
</feature>
<feature type="domain" description="Nsp15 N-terminal oligomerization" evidence="24">
    <location>
        <begin position="6424"/>
        <end position="6484"/>
    </location>
</feature>
<feature type="domain" description="AV-Nsp11N/CoV-Nsp15M" evidence="25">
    <location>
        <begin position="6485"/>
        <end position="6610"/>
    </location>
</feature>
<feature type="domain" description="NendoU" evidence="23">
    <location>
        <begin position="6627"/>
        <end position="6766"/>
    </location>
</feature>
<feature type="domain" description="Nidovirus-type SAM-dependent 2'-O-MTase" evidence="22">
    <location>
        <begin position="6771"/>
        <end position="7065"/>
    </location>
</feature>
<feature type="zinc finger region" description="C4-type" evidence="6">
    <location>
        <begin position="1723"/>
        <end position="1760"/>
    </location>
</feature>
<feature type="zinc finger region" evidence="1">
    <location>
        <begin position="4298"/>
        <end position="4314"/>
    </location>
</feature>
<feature type="zinc finger region" evidence="1">
    <location>
        <begin position="4341"/>
        <end position="4354"/>
    </location>
</feature>
<feature type="region of interest" description="C2H2" evidence="28">
    <location>
        <begin position="200"/>
        <end position="236"/>
    </location>
</feature>
<feature type="region of interest" description="C4" evidence="28">
    <location>
        <begin position="323"/>
        <end position="344"/>
    </location>
</feature>
<feature type="region of interest" description="C2HC" evidence="28">
    <location>
        <begin position="370"/>
        <end position="416"/>
    </location>
</feature>
<feature type="region of interest" description="HD1" evidence="1">
    <location>
        <begin position="2086"/>
        <end position="2365"/>
    </location>
</feature>
<feature type="region of interest" description="Y1" evidence="31">
    <location>
        <begin position="2366"/>
        <end position="2456"/>
    </location>
</feature>
<feature type="region of interest" description="ZF1" evidence="31">
    <location>
        <begin position="2370"/>
        <end position="2383"/>
    </location>
</feature>
<feature type="region of interest" description="ZF2" evidence="31">
    <location>
        <begin position="2416"/>
        <end position="2426"/>
    </location>
</feature>
<feature type="region of interest" description="CoV-Y" evidence="31">
    <location>
        <begin position="2457"/>
        <end position="2734"/>
    </location>
</feature>
<feature type="region of interest" description="Y2" evidence="31">
    <location>
        <begin position="2457"/>
        <end position="2551"/>
    </location>
</feature>
<feature type="region of interest" description="Y3" evidence="31">
    <location>
        <begin position="2552"/>
        <end position="2633"/>
    </location>
</feature>
<feature type="region of interest" description="Y4" evidence="31">
    <location>
        <begin position="2634"/>
        <end position="2734"/>
    </location>
</feature>
<feature type="region of interest" description="HD2" evidence="1">
    <location>
        <begin position="2749"/>
        <end position="3156"/>
    </location>
</feature>
<feature type="region of interest" description="HD3" evidence="1">
    <location>
        <begin position="3558"/>
        <end position="3770"/>
    </location>
</feature>
<feature type="region of interest" description="RdRp Fingers N-ter" evidence="15">
    <location>
        <begin position="4730"/>
        <end position="4944"/>
    </location>
</feature>
<feature type="region of interest" description="RdRp Palm N-ter" evidence="15">
    <location>
        <begin position="4945"/>
        <end position="4983"/>
    </location>
</feature>
<feature type="region of interest" description="RdRp Fingers C-ter" evidence="15">
    <location>
        <begin position="4984"/>
        <end position="5042"/>
    </location>
</feature>
<feature type="region of interest" description="RdRp Palm C-ter" evidence="15">
    <location>
        <begin position="5043"/>
        <end position="5178"/>
    </location>
</feature>
<feature type="region of interest" description="RdRp Thumb" evidence="15">
    <location>
        <begin position="5179"/>
        <end position="5295"/>
    </location>
</feature>
<feature type="region of interest" description="GpppA-binding" evidence="21">
    <location>
        <begin position="6310"/>
        <end position="6324"/>
    </location>
</feature>
<feature type="active site" description="For PL-PRO activity" evidence="6">
    <location>
        <position position="1645"/>
    </location>
</feature>
<feature type="active site" description="For PL-PRO activity" evidence="6">
    <location>
        <position position="1806"/>
    </location>
</feature>
<feature type="active site" description="For PL-PRO activity" evidence="6">
    <location>
        <position position="1820"/>
    </location>
</feature>
<feature type="active site" description="For 3CL-PRO activity" evidence="9">
    <location>
        <position position="3275"/>
    </location>
</feature>
<feature type="active site" description="For 3CL-PRO activity" evidence="9">
    <location>
        <position position="3379"/>
    </location>
</feature>
<feature type="active site" evidence="15">
    <location>
        <position position="5122"/>
    </location>
</feature>
<feature type="active site" evidence="15">
    <location>
        <position position="5123"/>
    </location>
</feature>
<feature type="active site" evidence="15">
    <location>
        <position position="5124"/>
    </location>
</feature>
<feature type="active site" evidence="20">
    <location>
        <position position="5986"/>
    </location>
</feature>
<feature type="active site" evidence="20">
    <location>
        <position position="5988"/>
    </location>
</feature>
<feature type="active site" evidence="20">
    <location>
        <position position="6087"/>
    </location>
</feature>
<feature type="active site" evidence="20">
    <location>
        <position position="6164"/>
    </location>
</feature>
<feature type="active site" evidence="20">
    <location>
        <position position="6169"/>
    </location>
</feature>
<feature type="active site" evidence="23">
    <location>
        <position position="6657"/>
    </location>
</feature>
<feature type="active site" evidence="23">
    <location>
        <position position="6672"/>
    </location>
</feature>
<feature type="active site" evidence="23">
    <location>
        <position position="6712"/>
    </location>
</feature>
<feature type="active site" evidence="22">
    <location>
        <position position="6815"/>
    </location>
</feature>
<feature type="active site" evidence="22">
    <location>
        <position position="6899"/>
    </location>
</feature>
<feature type="active site" evidence="22">
    <location>
        <position position="6939"/>
    </location>
</feature>
<feature type="active site" evidence="22">
    <location>
        <position position="6972"/>
    </location>
</feature>
<feature type="binding site" evidence="28">
    <location>
        <position position="200"/>
    </location>
    <ligand>
        <name>Zn(2+)</name>
        <dbReference type="ChEBI" id="CHEBI:29105"/>
        <label>1</label>
    </ligand>
</feature>
<feature type="binding site" evidence="28">
    <location>
        <position position="231"/>
    </location>
    <ligand>
        <name>Zn(2+)</name>
        <dbReference type="ChEBI" id="CHEBI:29105"/>
        <label>1</label>
    </ligand>
</feature>
<feature type="binding site" evidence="28">
    <location>
        <position position="234"/>
    </location>
    <ligand>
        <name>Zn(2+)</name>
        <dbReference type="ChEBI" id="CHEBI:29105"/>
        <label>1</label>
    </ligand>
</feature>
<feature type="binding site" evidence="28">
    <location>
        <position position="236"/>
    </location>
    <ligand>
        <name>Zn(2+)</name>
        <dbReference type="ChEBI" id="CHEBI:29105"/>
        <label>1</label>
    </ligand>
</feature>
<feature type="binding site" evidence="28">
    <location>
        <position position="323"/>
    </location>
    <ligand>
        <name>Zn(2+)</name>
        <dbReference type="ChEBI" id="CHEBI:29105"/>
        <label>2</label>
    </ligand>
</feature>
<feature type="binding site" evidence="28">
    <location>
        <position position="326"/>
    </location>
    <ligand>
        <name>Zn(2+)</name>
        <dbReference type="ChEBI" id="CHEBI:29105"/>
        <label>2</label>
    </ligand>
</feature>
<feature type="binding site" evidence="28">
    <location>
        <position position="341"/>
    </location>
    <ligand>
        <name>Zn(2+)</name>
        <dbReference type="ChEBI" id="CHEBI:29105"/>
        <label>2</label>
    </ligand>
</feature>
<feature type="binding site" evidence="28">
    <location>
        <position position="344"/>
    </location>
    <ligand>
        <name>Zn(2+)</name>
        <dbReference type="ChEBI" id="CHEBI:29105"/>
        <label>2</label>
    </ligand>
</feature>
<feature type="binding site" evidence="28">
    <location>
        <position position="370"/>
    </location>
    <ligand>
        <name>Zn(2+)</name>
        <dbReference type="ChEBI" id="CHEBI:29105"/>
        <label>3</label>
    </ligand>
</feature>
<feature type="binding site" evidence="28">
    <location>
        <position position="373"/>
    </location>
    <ligand>
        <name>Zn(2+)</name>
        <dbReference type="ChEBI" id="CHEBI:29105"/>
        <label>3</label>
    </ligand>
</feature>
<feature type="binding site" evidence="28">
    <location>
        <position position="382"/>
    </location>
    <ligand>
        <name>Zn(2+)</name>
        <dbReference type="ChEBI" id="CHEBI:29105"/>
        <label>3</label>
    </ligand>
</feature>
<feature type="binding site" evidence="28">
    <location>
        <position position="416"/>
    </location>
    <ligand>
        <name>Zn(2+)</name>
        <dbReference type="ChEBI" id="CHEBI:29105"/>
        <label>3</label>
    </ligand>
</feature>
<feature type="binding site" evidence="6">
    <location>
        <position position="1723"/>
    </location>
    <ligand>
        <name>Zn(2+)</name>
        <dbReference type="ChEBI" id="CHEBI:29105"/>
        <label>4</label>
    </ligand>
</feature>
<feature type="binding site" evidence="6">
    <location>
        <position position="1726"/>
    </location>
    <ligand>
        <name>Zn(2+)</name>
        <dbReference type="ChEBI" id="CHEBI:29105"/>
        <label>4</label>
    </ligand>
</feature>
<feature type="binding site" evidence="6">
    <location>
        <position position="1758"/>
    </location>
    <ligand>
        <name>Zn(2+)</name>
        <dbReference type="ChEBI" id="CHEBI:29105"/>
        <label>4</label>
    </ligand>
</feature>
<feature type="binding site" evidence="6">
    <location>
        <position position="1760"/>
    </location>
    <ligand>
        <name>Zn(2+)</name>
        <dbReference type="ChEBI" id="CHEBI:29105"/>
        <label>4</label>
    </ligand>
</feature>
<feature type="binding site" evidence="31">
    <location>
        <position position="2370"/>
    </location>
    <ligand>
        <name>Zn(2+)</name>
        <dbReference type="ChEBI" id="CHEBI:29105"/>
        <label>5</label>
    </ligand>
</feature>
<feature type="binding site" evidence="31">
    <location>
        <position position="2375"/>
    </location>
    <ligand>
        <name>Zn(2+)</name>
        <dbReference type="ChEBI" id="CHEBI:29105"/>
        <label>5</label>
    </ligand>
</feature>
<feature type="binding site" evidence="31">
    <location>
        <position position="2380"/>
    </location>
    <ligand>
        <name>Zn(2+)</name>
        <dbReference type="ChEBI" id="CHEBI:29105"/>
        <label>5</label>
    </ligand>
</feature>
<feature type="binding site" evidence="31">
    <location>
        <position position="2383"/>
    </location>
    <ligand>
        <name>Zn(2+)</name>
        <dbReference type="ChEBI" id="CHEBI:29105"/>
        <label>5</label>
    </ligand>
</feature>
<feature type="binding site" evidence="31">
    <location>
        <position position="2416"/>
    </location>
    <ligand>
        <name>Zn(2+)</name>
        <dbReference type="ChEBI" id="CHEBI:29105"/>
        <label>6</label>
    </ligand>
</feature>
<feature type="binding site" evidence="31">
    <location>
        <position position="2419"/>
    </location>
    <ligand>
        <name>Zn(2+)</name>
        <dbReference type="ChEBI" id="CHEBI:29105"/>
        <label>6</label>
    </ligand>
</feature>
<feature type="binding site" evidence="31">
    <location>
        <position position="2423"/>
    </location>
    <ligand>
        <name>Zn(2+)</name>
        <dbReference type="ChEBI" id="CHEBI:29105"/>
        <label>6</label>
    </ligand>
</feature>
<feature type="binding site" evidence="31">
    <location>
        <position position="2426"/>
    </location>
    <ligand>
        <name>Zn(2+)</name>
        <dbReference type="ChEBI" id="CHEBI:29105"/>
        <label>6</label>
    </ligand>
</feature>
<feature type="binding site" evidence="19">
    <location>
        <position position="4298"/>
    </location>
    <ligand>
        <name>Zn(2+)</name>
        <dbReference type="ChEBI" id="CHEBI:29105"/>
        <label>7</label>
    </ligand>
</feature>
<feature type="binding site" evidence="19">
    <location>
        <position position="4301"/>
    </location>
    <ligand>
        <name>Zn(2+)</name>
        <dbReference type="ChEBI" id="CHEBI:29105"/>
        <label>7</label>
    </ligand>
</feature>
<feature type="binding site" evidence="19">
    <location>
        <position position="4307"/>
    </location>
    <ligand>
        <name>Zn(2+)</name>
        <dbReference type="ChEBI" id="CHEBI:29105"/>
        <label>7</label>
    </ligand>
</feature>
<feature type="binding site" evidence="19">
    <location>
        <position position="4314"/>
    </location>
    <ligand>
        <name>Zn(2+)</name>
        <dbReference type="ChEBI" id="CHEBI:29105"/>
        <label>7</label>
    </ligand>
</feature>
<feature type="binding site" evidence="19">
    <location>
        <position position="4341"/>
    </location>
    <ligand>
        <name>Zn(2+)</name>
        <dbReference type="ChEBI" id="CHEBI:29105"/>
        <label>8</label>
    </ligand>
</feature>
<feature type="binding site" evidence="19">
    <location>
        <position position="4344"/>
    </location>
    <ligand>
        <name>Zn(2+)</name>
        <dbReference type="ChEBI" id="CHEBI:29105"/>
        <label>8</label>
    </ligand>
</feature>
<feature type="binding site" evidence="19">
    <location>
        <position position="4352"/>
    </location>
    <ligand>
        <name>Zn(2+)</name>
        <dbReference type="ChEBI" id="CHEBI:29105"/>
        <label>8</label>
    </ligand>
</feature>
<feature type="binding site" evidence="19">
    <location>
        <position position="4354"/>
    </location>
    <ligand>
        <name>Zn(2+)</name>
        <dbReference type="ChEBI" id="CHEBI:29105"/>
        <label>8</label>
    </ligand>
</feature>
<feature type="binding site" evidence="3">
    <location>
        <position position="4572"/>
    </location>
    <ligand>
        <name>Mn(2+)</name>
        <dbReference type="ChEBI" id="CHEBI:29035"/>
    </ligand>
</feature>
<feature type="binding site" evidence="3">
    <location>
        <position position="4581"/>
    </location>
    <ligand>
        <name>Mn(2+)</name>
        <dbReference type="ChEBI" id="CHEBI:29035"/>
    </ligand>
</feature>
<feature type="binding site" evidence="34">
    <location>
        <position position="4658"/>
    </location>
    <ligand>
        <name>Zn(2+)</name>
        <dbReference type="ChEBI" id="CHEBI:29105"/>
        <label>9</label>
    </ligand>
</feature>
<feature type="binding site" evidence="34">
    <location>
        <position position="4664"/>
    </location>
    <ligand>
        <name>Zn(2+)</name>
        <dbReference type="ChEBI" id="CHEBI:29105"/>
        <label>9</label>
    </ligand>
</feature>
<feature type="binding site" evidence="34">
    <location>
        <position position="4669"/>
    </location>
    <ligand>
        <name>Zn(2+)</name>
        <dbReference type="ChEBI" id="CHEBI:29105"/>
        <label>9</label>
    </ligand>
</feature>
<feature type="binding site" evidence="34">
    <location>
        <position position="4673"/>
    </location>
    <ligand>
        <name>Zn(2+)</name>
        <dbReference type="ChEBI" id="CHEBI:29105"/>
        <label>9</label>
    </ligand>
</feature>
<feature type="binding site" evidence="15">
    <location>
        <position position="4850"/>
    </location>
    <ligand>
        <name>Zn(2+)</name>
        <dbReference type="ChEBI" id="CHEBI:29105"/>
        <label>10</label>
    </ligand>
</feature>
<feature type="binding site" evidence="15">
    <location>
        <position position="5005"/>
    </location>
    <ligand>
        <name>Zn(2+)</name>
        <dbReference type="ChEBI" id="CHEBI:29105"/>
        <label>10</label>
    </ligand>
</feature>
<feature type="binding site" evidence="15">
    <location>
        <position position="5008"/>
    </location>
    <ligand>
        <name>Zn(2+)</name>
        <dbReference type="ChEBI" id="CHEBI:29105"/>
        <label>10</label>
    </ligand>
</feature>
<feature type="binding site" evidence="15">
    <location>
        <position position="5009"/>
    </location>
    <ligand>
        <name>Zn(2+)</name>
        <dbReference type="ChEBI" id="CHEBI:29105"/>
        <label>10</label>
    </ligand>
</feature>
<feature type="binding site" evidence="10">
    <location>
        <position position="5300"/>
    </location>
    <ligand>
        <name>Zn(2+)</name>
        <dbReference type="ChEBI" id="CHEBI:29105"/>
        <label>11</label>
    </ligand>
</feature>
<feature type="binding site" evidence="10">
    <location>
        <position position="5303"/>
    </location>
    <ligand>
        <name>Zn(2+)</name>
        <dbReference type="ChEBI" id="CHEBI:29105"/>
        <label>11</label>
    </ligand>
</feature>
<feature type="binding site" evidence="10">
    <location>
        <position position="5311"/>
    </location>
    <ligand>
        <name>Zn(2+)</name>
        <dbReference type="ChEBI" id="CHEBI:29105"/>
        <label>12</label>
    </ligand>
</feature>
<feature type="binding site" evidence="10">
    <location>
        <position position="5314"/>
    </location>
    <ligand>
        <name>Zn(2+)</name>
        <dbReference type="ChEBI" id="CHEBI:29105"/>
        <label>12</label>
    </ligand>
</feature>
<feature type="binding site" evidence="10">
    <location>
        <position position="5321"/>
    </location>
    <ligand>
        <name>Zn(2+)</name>
        <dbReference type="ChEBI" id="CHEBI:29105"/>
        <label>11</label>
    </ligand>
</feature>
<feature type="binding site" evidence="10">
    <location>
        <position position="5324"/>
    </location>
    <ligand>
        <name>Zn(2+)</name>
        <dbReference type="ChEBI" id="CHEBI:29105"/>
        <label>11</label>
    </ligand>
</feature>
<feature type="binding site" evidence="10">
    <location>
        <position position="5328"/>
    </location>
    <ligand>
        <name>Zn(2+)</name>
        <dbReference type="ChEBI" id="CHEBI:29105"/>
        <label>12</label>
    </ligand>
</feature>
<feature type="binding site" evidence="10">
    <location>
        <position position="5334"/>
    </location>
    <ligand>
        <name>Zn(2+)</name>
        <dbReference type="ChEBI" id="CHEBI:29105"/>
        <label>12</label>
    </ligand>
</feature>
<feature type="binding site" evidence="10">
    <location>
        <position position="5345"/>
    </location>
    <ligand>
        <name>Zn(2+)</name>
        <dbReference type="ChEBI" id="CHEBI:29105"/>
        <label>13</label>
    </ligand>
</feature>
<feature type="binding site" evidence="10">
    <location>
        <position position="5350"/>
    </location>
    <ligand>
        <name>Zn(2+)</name>
        <dbReference type="ChEBI" id="CHEBI:29105"/>
        <label>13</label>
    </ligand>
</feature>
<feature type="binding site" evidence="10">
    <location>
        <position position="5367"/>
    </location>
    <ligand>
        <name>Zn(2+)</name>
        <dbReference type="ChEBI" id="CHEBI:29105"/>
        <label>13</label>
    </ligand>
</feature>
<feature type="binding site" evidence="10">
    <location>
        <position position="5370"/>
    </location>
    <ligand>
        <name>Zn(2+)</name>
        <dbReference type="ChEBI" id="CHEBI:29105"/>
        <label>13</label>
    </ligand>
</feature>
<feature type="binding site" evidence="1">
    <location>
        <begin position="5577"/>
        <end position="5584"/>
    </location>
    <ligand>
        <name>ATP</name>
        <dbReference type="ChEBI" id="CHEBI:30616"/>
    </ligand>
</feature>
<feature type="binding site" evidence="20">
    <location>
        <position position="6103"/>
    </location>
    <ligand>
        <name>Zn(2+)</name>
        <dbReference type="ChEBI" id="CHEBI:29105"/>
        <label>14</label>
    </ligand>
</feature>
<feature type="binding site" evidence="20">
    <location>
        <position position="6106"/>
    </location>
    <ligand>
        <name>Zn(2+)</name>
        <dbReference type="ChEBI" id="CHEBI:29105"/>
        <label>14</label>
    </ligand>
</feature>
<feature type="binding site" evidence="20">
    <location>
        <position position="6122"/>
    </location>
    <ligand>
        <name>Zn(2+)</name>
        <dbReference type="ChEBI" id="CHEBI:29105"/>
        <label>14</label>
    </ligand>
</feature>
<feature type="binding site" evidence="20">
    <location>
        <position position="6125"/>
    </location>
    <ligand>
        <name>Zn(2+)</name>
        <dbReference type="ChEBI" id="CHEBI:29105"/>
        <label>14</label>
    </ligand>
</feature>
<feature type="binding site" evidence="20">
    <location>
        <position position="6153"/>
    </location>
    <ligand>
        <name>Zn(2+)</name>
        <dbReference type="ChEBI" id="CHEBI:29105"/>
        <label>15</label>
    </ligand>
</feature>
<feature type="binding site" evidence="20">
    <location>
        <position position="6157"/>
    </location>
    <ligand>
        <name>Zn(2+)</name>
        <dbReference type="ChEBI" id="CHEBI:29105"/>
        <label>15</label>
    </ligand>
</feature>
<feature type="binding site" evidence="20">
    <location>
        <position position="6160"/>
    </location>
    <ligand>
        <name>Zn(2+)</name>
        <dbReference type="ChEBI" id="CHEBI:29105"/>
        <label>15</label>
    </ligand>
</feature>
<feature type="binding site" evidence="20">
    <location>
        <position position="6175"/>
    </location>
    <ligand>
        <name>Zn(2+)</name>
        <dbReference type="ChEBI" id="CHEBI:29105"/>
        <label>15</label>
    </ligand>
</feature>
<feature type="binding site" evidence="21">
    <location>
        <begin position="6227"/>
        <end position="6233"/>
    </location>
    <ligand>
        <name>S-adenosyl-L-methionine</name>
        <dbReference type="ChEBI" id="CHEBI:59789"/>
    </ligand>
</feature>
<feature type="binding site" evidence="21">
    <location>
        <position position="6348"/>
    </location>
    <ligand>
        <name>Zn(2+)</name>
        <dbReference type="ChEBI" id="CHEBI:29105"/>
        <label>16</label>
    </ligand>
</feature>
<feature type="binding site" evidence="21">
    <location>
        <position position="6369"/>
    </location>
    <ligand>
        <name>Zn(2+)</name>
        <dbReference type="ChEBI" id="CHEBI:29105"/>
        <label>16</label>
    </ligand>
</feature>
<feature type="binding site" evidence="21">
    <location>
        <position position="6380"/>
    </location>
    <ligand>
        <name>Zn(2+)</name>
        <dbReference type="ChEBI" id="CHEBI:29105"/>
        <label>16</label>
    </ligand>
</feature>
<feature type="binding site" evidence="21">
    <location>
        <position position="6383"/>
    </location>
    <ligand>
        <name>Zn(2+)</name>
        <dbReference type="ChEBI" id="CHEBI:29105"/>
        <label>16</label>
    </ligand>
</feature>
<feature type="site" description="Cleavage; by PL-PRO" evidence="1">
    <location>
        <begin position="179"/>
        <end position="180"/>
    </location>
</feature>
<feature type="site" description="Cleavage; by PL-PRO" evidence="1">
    <location>
        <begin position="818"/>
        <end position="819"/>
    </location>
</feature>
<feature type="site" description="Cleavage; by 3CL-PRO" evidence="1">
    <location>
        <begin position="3234"/>
        <end position="3235"/>
    </location>
</feature>
<feature type="site" description="Cleavage; by 3CL-PRO" evidence="1">
    <location>
        <begin position="3540"/>
        <end position="3541"/>
    </location>
</feature>
<feature type="site" description="Cleavage; by 3CL-PRO" evidence="1">
    <location>
        <begin position="3830"/>
        <end position="3831"/>
    </location>
</feature>
<feature type="site" description="Cleavage; by 3CL-PRO" evidence="1">
    <location>
        <begin position="3913"/>
        <end position="3914"/>
    </location>
</feature>
<feature type="site" description="Cleavage; by 3CL-PRO" evidence="1">
    <location>
        <begin position="4111"/>
        <end position="4112"/>
    </location>
</feature>
<feature type="site" description="Cleavage; by 3CL-PRO" evidence="1">
    <location>
        <begin position="4224"/>
        <end position="4225"/>
    </location>
</feature>
<feature type="site" description="Cleavage; by 3CL-PRO" evidence="1">
    <location>
        <begin position="4363"/>
        <end position="4364"/>
    </location>
</feature>
<feature type="site" description="Cleavage; by 3CL-PRO" evidence="1">
    <location>
        <begin position="5295"/>
        <end position="5296"/>
    </location>
</feature>
<feature type="site" description="Cleavage; by 3CL-PRO" evidence="1">
    <location>
        <begin position="5896"/>
        <end position="5897"/>
    </location>
</feature>
<feature type="site" description="Cleavage; by 3CL-PRO" evidence="1">
    <location>
        <begin position="6423"/>
        <end position="6424"/>
    </location>
</feature>
<feature type="site" description="Cleavage; by 3CL-PRO" evidence="1">
    <location>
        <begin position="6769"/>
        <end position="6770"/>
    </location>
</feature>
<feature type="disulfide bond" evidence="32">
    <location>
        <begin position="2234"/>
        <end position="2262"/>
    </location>
</feature>
<feature type="disulfide bond" evidence="32">
    <location>
        <begin position="2253"/>
        <end position="2259"/>
    </location>
</feature>
<organismHost>
    <name type="scientific">Rhinolophus sinicus</name>
    <name type="common">Chinese rufous horseshoe bat</name>
    <dbReference type="NCBI Taxonomy" id="89399"/>
</organismHost>
<dbReference type="EC" id="3.4.19.12"/>
<dbReference type="EC" id="3.4.22.-"/>
<dbReference type="EC" id="2.7.7.48"/>
<dbReference type="EC" id="2.7.7.50"/>
<dbReference type="EC" id="3.6.4.12"/>
<dbReference type="EC" id="3.6.4.13"/>
<dbReference type="EC" id="2.1.1.56"/>
<dbReference type="EC" id="3.1.13.-"/>
<dbReference type="EC" id="4.6.1.-"/>
<dbReference type="EC" id="2.1.1.57"/>
<dbReference type="EMBL" id="DQ022305">
    <property type="protein sequence ID" value="AAY88865.2"/>
    <property type="molecule type" value="Genomic_RNA"/>
</dbReference>
<dbReference type="BMRB" id="P0C6W2"/>
<dbReference type="SMR" id="P0C6W2"/>
<dbReference type="MEROPS" id="C16.009"/>
<dbReference type="MEROPS" id="C30.005"/>
<dbReference type="Proteomes" id="UP000007450">
    <property type="component" value="Segment"/>
</dbReference>
<dbReference type="GO" id="GO:0044172">
    <property type="term" value="C:host cell endoplasmic reticulum-Golgi intermediate compartment"/>
    <property type="evidence" value="ECO:0007669"/>
    <property type="project" value="UniProtKB-SubCell"/>
</dbReference>
<dbReference type="GO" id="GO:0033644">
    <property type="term" value="C:host cell membrane"/>
    <property type="evidence" value="ECO:0007669"/>
    <property type="project" value="UniProtKB-SubCell"/>
</dbReference>
<dbReference type="GO" id="GO:0044220">
    <property type="term" value="C:host cell perinuclear region of cytoplasm"/>
    <property type="evidence" value="ECO:0007669"/>
    <property type="project" value="UniProtKB-SubCell"/>
</dbReference>
<dbReference type="GO" id="GO:0016020">
    <property type="term" value="C:membrane"/>
    <property type="evidence" value="ECO:0007669"/>
    <property type="project" value="UniProtKB-KW"/>
</dbReference>
<dbReference type="GO" id="GO:0000175">
    <property type="term" value="F:3'-5'-RNA exonuclease activity"/>
    <property type="evidence" value="ECO:0007669"/>
    <property type="project" value="InterPro"/>
</dbReference>
<dbReference type="GO" id="GO:0043139">
    <property type="term" value="F:5'-3' DNA helicase activity"/>
    <property type="evidence" value="ECO:0007669"/>
    <property type="project" value="TreeGrafter"/>
</dbReference>
<dbReference type="GO" id="GO:0005524">
    <property type="term" value="F:ATP binding"/>
    <property type="evidence" value="ECO:0007669"/>
    <property type="project" value="UniProtKB-KW"/>
</dbReference>
<dbReference type="GO" id="GO:0016887">
    <property type="term" value="F:ATP hydrolysis activity"/>
    <property type="evidence" value="ECO:0007669"/>
    <property type="project" value="RHEA"/>
</dbReference>
<dbReference type="GO" id="GO:0004843">
    <property type="term" value="F:cysteine-type deubiquitinase activity"/>
    <property type="evidence" value="ECO:0007669"/>
    <property type="project" value="UniProtKB-EC"/>
</dbReference>
<dbReference type="GO" id="GO:0004197">
    <property type="term" value="F:cysteine-type endopeptidase activity"/>
    <property type="evidence" value="ECO:0007669"/>
    <property type="project" value="InterPro"/>
</dbReference>
<dbReference type="GO" id="GO:0004519">
    <property type="term" value="F:endonuclease activity"/>
    <property type="evidence" value="ECO:0007669"/>
    <property type="project" value="UniProtKB-KW"/>
</dbReference>
<dbReference type="GO" id="GO:0002151">
    <property type="term" value="F:G-quadruplex RNA binding"/>
    <property type="evidence" value="ECO:0007669"/>
    <property type="project" value="InterPro"/>
</dbReference>
<dbReference type="GO" id="GO:0016829">
    <property type="term" value="F:lyase activity"/>
    <property type="evidence" value="ECO:0007669"/>
    <property type="project" value="UniProtKB-KW"/>
</dbReference>
<dbReference type="GO" id="GO:0004483">
    <property type="term" value="F:mRNA (nucleoside-2'-O-)-methyltransferase activity"/>
    <property type="evidence" value="ECO:0007669"/>
    <property type="project" value="InterPro"/>
</dbReference>
<dbReference type="GO" id="GO:0004482">
    <property type="term" value="F:mRNA 5'-cap (guanine-N7-)-methyltransferase activity"/>
    <property type="evidence" value="ECO:0007669"/>
    <property type="project" value="InterPro"/>
</dbReference>
<dbReference type="GO" id="GO:0008242">
    <property type="term" value="F:omega peptidase activity"/>
    <property type="evidence" value="ECO:0007669"/>
    <property type="project" value="InterPro"/>
</dbReference>
<dbReference type="GO" id="GO:0003724">
    <property type="term" value="F:RNA helicase activity"/>
    <property type="evidence" value="ECO:0007669"/>
    <property type="project" value="UniProtKB-EC"/>
</dbReference>
<dbReference type="GO" id="GO:0003968">
    <property type="term" value="F:RNA-directed RNA polymerase activity"/>
    <property type="evidence" value="ECO:0007669"/>
    <property type="project" value="UniProtKB-KW"/>
</dbReference>
<dbReference type="GO" id="GO:0003727">
    <property type="term" value="F:single-stranded RNA binding"/>
    <property type="evidence" value="ECO:0007669"/>
    <property type="project" value="InterPro"/>
</dbReference>
<dbReference type="GO" id="GO:0008270">
    <property type="term" value="F:zinc ion binding"/>
    <property type="evidence" value="ECO:0007669"/>
    <property type="project" value="UniProtKB-KW"/>
</dbReference>
<dbReference type="GO" id="GO:0006351">
    <property type="term" value="P:DNA-templated transcription"/>
    <property type="evidence" value="ECO:0007669"/>
    <property type="project" value="InterPro"/>
</dbReference>
<dbReference type="GO" id="GO:0006508">
    <property type="term" value="P:proteolysis"/>
    <property type="evidence" value="ECO:0007669"/>
    <property type="project" value="UniProtKB-KW"/>
</dbReference>
<dbReference type="GO" id="GO:0010506">
    <property type="term" value="P:regulation of autophagy"/>
    <property type="evidence" value="ECO:0007669"/>
    <property type="project" value="InterPro"/>
</dbReference>
<dbReference type="GO" id="GO:0039520">
    <property type="term" value="P:symbiont-mediated activation of host autophagy"/>
    <property type="evidence" value="ECO:0007669"/>
    <property type="project" value="UniProtKB-KW"/>
</dbReference>
<dbReference type="GO" id="GO:0039595">
    <property type="term" value="P:symbiont-mediated degradation of host mRNA"/>
    <property type="evidence" value="ECO:0007669"/>
    <property type="project" value="UniProtKB-KW"/>
</dbReference>
<dbReference type="GO" id="GO:0039648">
    <property type="term" value="P:symbiont-mediated perturbation of host ubiquitin-like protein modification"/>
    <property type="evidence" value="ECO:0007669"/>
    <property type="project" value="UniProtKB-KW"/>
</dbReference>
<dbReference type="GO" id="GO:0039657">
    <property type="term" value="P:symbiont-mediated suppression of host gene expression"/>
    <property type="evidence" value="ECO:0007669"/>
    <property type="project" value="UniProtKB-KW"/>
</dbReference>
<dbReference type="GO" id="GO:0039579">
    <property type="term" value="P:symbiont-mediated suppression of host ISG15-protein conjugation"/>
    <property type="evidence" value="ECO:0007669"/>
    <property type="project" value="UniProtKB-KW"/>
</dbReference>
<dbReference type="GO" id="GO:0085034">
    <property type="term" value="P:symbiont-mediated suppression of host NF-kappaB cascade"/>
    <property type="evidence" value="ECO:0007669"/>
    <property type="project" value="UniProtKB-KW"/>
</dbReference>
<dbReference type="GO" id="GO:0039502">
    <property type="term" value="P:symbiont-mediated suppression of host type I interferon-mediated signaling pathway"/>
    <property type="evidence" value="ECO:0007669"/>
    <property type="project" value="UniProtKB-KW"/>
</dbReference>
<dbReference type="GO" id="GO:0019082">
    <property type="term" value="P:viral protein processing"/>
    <property type="evidence" value="ECO:0007669"/>
    <property type="project" value="InterPro"/>
</dbReference>
<dbReference type="GO" id="GO:0039694">
    <property type="term" value="P:viral RNA genome replication"/>
    <property type="evidence" value="ECO:0007669"/>
    <property type="project" value="InterPro"/>
</dbReference>
<dbReference type="GO" id="GO:0075523">
    <property type="term" value="P:viral translational frameshifting"/>
    <property type="evidence" value="ECO:0007669"/>
    <property type="project" value="UniProtKB-KW"/>
</dbReference>
<dbReference type="CDD" id="cd21409">
    <property type="entry name" value="1B_cv_Nsp13-like"/>
    <property type="match status" value="1"/>
</dbReference>
<dbReference type="CDD" id="cd21560">
    <property type="entry name" value="betaCoV-Nsp6"/>
    <property type="match status" value="1"/>
</dbReference>
<dbReference type="CDD" id="cd21722">
    <property type="entry name" value="betaCoV_Nsp13-helicase"/>
    <property type="match status" value="1"/>
</dbReference>
<dbReference type="CDD" id="cd21659">
    <property type="entry name" value="betaCoV_Nsp14"/>
    <property type="match status" value="1"/>
</dbReference>
<dbReference type="CDD" id="cd21516">
    <property type="entry name" value="betaCoV_Nsp2_SARS-like"/>
    <property type="match status" value="1"/>
</dbReference>
<dbReference type="CDD" id="cd21666">
    <property type="entry name" value="betaCoV_Nsp5_Mpro"/>
    <property type="match status" value="1"/>
</dbReference>
<dbReference type="CDD" id="cd21827">
    <property type="entry name" value="betaCoV_Nsp7"/>
    <property type="match status" value="1"/>
</dbReference>
<dbReference type="CDD" id="cd21831">
    <property type="entry name" value="betaCoV_Nsp8"/>
    <property type="match status" value="1"/>
</dbReference>
<dbReference type="CDD" id="cd21898">
    <property type="entry name" value="betaCoV_Nsp9"/>
    <property type="match status" value="1"/>
</dbReference>
<dbReference type="CDD" id="cd21732">
    <property type="entry name" value="betaCoV_PLPro"/>
    <property type="match status" value="1"/>
</dbReference>
<dbReference type="CDD" id="cd23528">
    <property type="entry name" value="capping_2-OMTase_betaCoV_Nsp16"/>
    <property type="match status" value="1"/>
</dbReference>
<dbReference type="CDD" id="cd21872">
    <property type="entry name" value="CoV_Nsp10"/>
    <property type="match status" value="1"/>
</dbReference>
<dbReference type="CDD" id="cd21473">
    <property type="entry name" value="cv_Nsp4_TM"/>
    <property type="match status" value="1"/>
</dbReference>
<dbReference type="CDD" id="cd21167">
    <property type="entry name" value="M_alpha_beta_cv_Nsp15-like"/>
    <property type="match status" value="1"/>
</dbReference>
<dbReference type="CDD" id="cd21563">
    <property type="entry name" value="Macro_cv_SUD-M_Nsp3-like"/>
    <property type="match status" value="1"/>
</dbReference>
<dbReference type="CDD" id="cd21562">
    <property type="entry name" value="Macro_cv_SUD-N_Nsp3-like"/>
    <property type="match status" value="1"/>
</dbReference>
<dbReference type="CDD" id="cd21557">
    <property type="entry name" value="Macro_X_Nsp3-like"/>
    <property type="match status" value="1"/>
</dbReference>
<dbReference type="CDD" id="cd21161">
    <property type="entry name" value="NendoU_cv_Nsp15-like"/>
    <property type="match status" value="1"/>
</dbReference>
<dbReference type="CDD" id="cd21171">
    <property type="entry name" value="NTD_alpha_betaCoV_Nsp15-like"/>
    <property type="match status" value="1"/>
</dbReference>
<dbReference type="CDD" id="cd22662">
    <property type="entry name" value="SARS-CoV-like_Nsp1_C"/>
    <property type="match status" value="1"/>
</dbReference>
<dbReference type="CDD" id="cd21796">
    <property type="entry name" value="SARS-CoV-like_Nsp1_N"/>
    <property type="match status" value="1"/>
</dbReference>
<dbReference type="CDD" id="cd21814">
    <property type="entry name" value="SARS-CoV-like_Nsp3_betaSM"/>
    <property type="match status" value="1"/>
</dbReference>
<dbReference type="CDD" id="cd21822">
    <property type="entry name" value="SARS-CoV-like_Nsp3_NAB"/>
    <property type="match status" value="1"/>
</dbReference>
<dbReference type="CDD" id="cd21591">
    <property type="entry name" value="SARS-CoV-like_RdRp"/>
    <property type="match status" value="1"/>
</dbReference>
<dbReference type="CDD" id="cd21689">
    <property type="entry name" value="stalk_CoV_Nsp13-like"/>
    <property type="match status" value="1"/>
</dbReference>
<dbReference type="CDD" id="cd21525">
    <property type="entry name" value="SUD_C_SARS-CoV_Nsp3"/>
    <property type="match status" value="1"/>
</dbReference>
<dbReference type="CDD" id="cd21717">
    <property type="entry name" value="TM_Y_SARS-CoV-like_Nsp3_C"/>
    <property type="match status" value="1"/>
</dbReference>
<dbReference type="CDD" id="cd21467">
    <property type="entry name" value="Ubl1_cv_Nsp3_N-like"/>
    <property type="match status" value="1"/>
</dbReference>
<dbReference type="CDD" id="cd21401">
    <property type="entry name" value="ZBD_cv_Nsp13-like"/>
    <property type="match status" value="1"/>
</dbReference>
<dbReference type="FunFam" id="1.10.8.370:FF:000001">
    <property type="entry name" value="Orf1a polyprotein"/>
    <property type="match status" value="1"/>
</dbReference>
<dbReference type="FunFam" id="2.40.10.250:FF:000001">
    <property type="entry name" value="Orf1a polyprotein"/>
    <property type="match status" value="1"/>
</dbReference>
<dbReference type="FunFam" id="3.40.220.30:FF:000001">
    <property type="entry name" value="Orf1a polyprotein"/>
    <property type="match status" value="1"/>
</dbReference>
<dbReference type="FunFam" id="3.30.160.820:FF:000001">
    <property type="entry name" value="Orf1ab polyprotein"/>
    <property type="match status" value="1"/>
</dbReference>
<dbReference type="FunFam" id="3.40.50.150:FF:000162">
    <property type="entry name" value="Orf1ab polyprotein"/>
    <property type="match status" value="1"/>
</dbReference>
<dbReference type="FunFam" id="3.40.50.300:FF:001105">
    <property type="entry name" value="Orf1ab polyprotein"/>
    <property type="match status" value="1"/>
</dbReference>
<dbReference type="FunFam" id="3.40.50.300:FF:001139">
    <property type="entry name" value="Orf1ab polyprotein"/>
    <property type="match status" value="1"/>
</dbReference>
<dbReference type="FunFam" id="1.10.150.420:FF:000001">
    <property type="entry name" value="Replicase polyprotein"/>
    <property type="match status" value="1"/>
</dbReference>
<dbReference type="FunFam" id="1.10.1840.10:FF:000001">
    <property type="entry name" value="Replicase polyprotein 1a"/>
    <property type="match status" value="1"/>
</dbReference>
<dbReference type="FunFam" id="1.10.8.1190:FF:000001">
    <property type="entry name" value="Replicase polyprotein 1a"/>
    <property type="match status" value="1"/>
</dbReference>
<dbReference type="FunFam" id="2.40.10.10:FF:000033">
    <property type="entry name" value="Replicase polyprotein 1a"/>
    <property type="match status" value="1"/>
</dbReference>
<dbReference type="FunFam" id="3.40.50.11580:FF:000001">
    <property type="entry name" value="Replicase polyprotein 1ab"/>
    <property type="match status" value="1"/>
</dbReference>
<dbReference type="Gene3D" id="1.10.8.1190">
    <property type="match status" value="1"/>
</dbReference>
<dbReference type="Gene3D" id="2.60.120.1680">
    <property type="match status" value="1"/>
</dbReference>
<dbReference type="Gene3D" id="3.10.20.350">
    <property type="match status" value="1"/>
</dbReference>
<dbReference type="Gene3D" id="3.10.20.540">
    <property type="match status" value="1"/>
</dbReference>
<dbReference type="Gene3D" id="3.40.50.11580">
    <property type="match status" value="1"/>
</dbReference>
<dbReference type="Gene3D" id="6.10.140.2090">
    <property type="match status" value="1"/>
</dbReference>
<dbReference type="Gene3D" id="1.10.150.420">
    <property type="entry name" value="Coronavirus nonstructural protein 4 C-terminus"/>
    <property type="match status" value="1"/>
</dbReference>
<dbReference type="Gene3D" id="3.40.30.150">
    <property type="entry name" value="Coronavirus polyprotein cleavage domain"/>
    <property type="match status" value="1"/>
</dbReference>
<dbReference type="Gene3D" id="3.40.220.10">
    <property type="entry name" value="Leucine Aminopeptidase, subunit E, domain 1"/>
    <property type="match status" value="1"/>
</dbReference>
<dbReference type="Gene3D" id="1.10.1840.10">
    <property type="entry name" value="main proteinase (3clpro) structure, domain 3"/>
    <property type="match status" value="1"/>
</dbReference>
<dbReference type="Gene3D" id="3.30.160.820">
    <property type="entry name" value="Nsp15 N-terminal domain-like"/>
    <property type="match status" value="1"/>
</dbReference>
<dbReference type="Gene3D" id="3.40.220.20">
    <property type="entry name" value="Nsp3, SUD-M subdomain"/>
    <property type="match status" value="1"/>
</dbReference>
<dbReference type="Gene3D" id="3.40.220.30">
    <property type="entry name" value="Nsp3, SUD-N subdomain"/>
    <property type="match status" value="1"/>
</dbReference>
<dbReference type="Gene3D" id="1.10.8.370">
    <property type="entry name" value="nsp7 replicase"/>
    <property type="match status" value="1"/>
</dbReference>
<dbReference type="Gene3D" id="3.30.70.3540">
    <property type="entry name" value="Nsp8 replicase, head domain"/>
    <property type="match status" value="1"/>
</dbReference>
<dbReference type="Gene3D" id="3.40.50.300">
    <property type="entry name" value="P-loop containing nucleotide triphosphate hydrolases"/>
    <property type="match status" value="2"/>
</dbReference>
<dbReference type="Gene3D" id="2.40.10.250">
    <property type="entry name" value="Replicase NSP9"/>
    <property type="match status" value="1"/>
</dbReference>
<dbReference type="Gene3D" id="3.40.50.11020">
    <property type="entry name" value="Replicase polyprotein, nucleic acid-binding domain"/>
    <property type="match status" value="1"/>
</dbReference>
<dbReference type="Gene3D" id="2.40.10.10">
    <property type="entry name" value="Trypsin-like serine proteases"/>
    <property type="match status" value="2"/>
</dbReference>
<dbReference type="Gene3D" id="3.40.50.150">
    <property type="entry name" value="Vaccinia Virus protein VP39"/>
    <property type="match status" value="1"/>
</dbReference>
<dbReference type="InterPro" id="IPR027351">
    <property type="entry name" value="(+)RNA_virus_helicase_core_dom"/>
</dbReference>
<dbReference type="InterPro" id="IPR046443">
    <property type="entry name" value="a/bCoV_NSP1_glob"/>
</dbReference>
<dbReference type="InterPro" id="IPR046440">
    <property type="entry name" value="AV_NSP11N_COV_NSP15M"/>
</dbReference>
<dbReference type="InterPro" id="IPR046442">
    <property type="entry name" value="bCoV_NSP1_C"/>
</dbReference>
<dbReference type="InterPro" id="IPR050534">
    <property type="entry name" value="Coronavir_polyprotein_1ab"/>
</dbReference>
<dbReference type="InterPro" id="IPR043608">
    <property type="entry name" value="CoV_NSP15_M"/>
</dbReference>
<dbReference type="InterPro" id="IPR043606">
    <property type="entry name" value="CoV_NSP15_N"/>
</dbReference>
<dbReference type="InterPro" id="IPR043613">
    <property type="entry name" value="CoV_NSP2_C"/>
</dbReference>
<dbReference type="InterPro" id="IPR047573">
    <property type="entry name" value="CoV_NSP2_M"/>
</dbReference>
<dbReference type="InterPro" id="IPR049894">
    <property type="entry name" value="COV_NSP3_3ECTO"/>
</dbReference>
<dbReference type="InterPro" id="IPR043611">
    <property type="entry name" value="CoV_NSP3_C"/>
</dbReference>
<dbReference type="InterPro" id="IPR047566">
    <property type="entry name" value="CoV_NSP3_Y"/>
</dbReference>
<dbReference type="InterPro" id="IPR032505">
    <property type="entry name" value="CoV_NSP4_C"/>
</dbReference>
<dbReference type="InterPro" id="IPR043612">
    <property type="entry name" value="CoV_NSP4_N"/>
</dbReference>
<dbReference type="InterPro" id="IPR043502">
    <property type="entry name" value="DNA/RNA_pol_sf"/>
</dbReference>
<dbReference type="InterPro" id="IPR041679">
    <property type="entry name" value="DNA2/NAM7-like_C"/>
</dbReference>
<dbReference type="InterPro" id="IPR022733">
    <property type="entry name" value="DPUP_SUD_C_bCoV"/>
</dbReference>
<dbReference type="InterPro" id="IPR037227">
    <property type="entry name" value="EndoU-like"/>
</dbReference>
<dbReference type="InterPro" id="IPR002589">
    <property type="entry name" value="Macro_dom"/>
</dbReference>
<dbReference type="InterPro" id="IPR043472">
    <property type="entry name" value="Macro_dom-like"/>
</dbReference>
<dbReference type="InterPro" id="IPR044371">
    <property type="entry name" value="Macro_X_NSP3-like"/>
</dbReference>
<dbReference type="InterPro" id="IPR046435">
    <property type="entry name" value="N7_MTase_CoV"/>
</dbReference>
<dbReference type="InterPro" id="IPR043609">
    <property type="entry name" value="NendoU_nidovirus"/>
</dbReference>
<dbReference type="InterPro" id="IPR044863">
    <property type="entry name" value="NIRAN"/>
</dbReference>
<dbReference type="InterPro" id="IPR046438">
    <property type="entry name" value="NIV_2_O_MTASE"/>
</dbReference>
<dbReference type="InterPro" id="IPR046436">
    <property type="entry name" value="NIV_EXON"/>
</dbReference>
<dbReference type="InterPro" id="IPR036333">
    <property type="entry name" value="NSP10_sf_CoV"/>
</dbReference>
<dbReference type="InterPro" id="IPR047570">
    <property type="entry name" value="NSP12_IF_CoV"/>
</dbReference>
<dbReference type="InterPro" id="IPR044343">
    <property type="entry name" value="NSP13_1B_dom_CoV"/>
</dbReference>
<dbReference type="InterPro" id="IPR048673">
    <property type="entry name" value="NSP13_stalk_CoV"/>
</dbReference>
<dbReference type="InterPro" id="IPR048672">
    <property type="entry name" value="NSP13_ZBD_CoV"/>
</dbReference>
<dbReference type="InterPro" id="IPR027352">
    <property type="entry name" value="NSP13_ZBD_CoV-like"/>
</dbReference>
<dbReference type="InterPro" id="IPR044315">
    <property type="entry name" value="NSP14_betaCoV"/>
</dbReference>
<dbReference type="InterPro" id="IPR009466">
    <property type="entry name" value="NSP14_CoV"/>
</dbReference>
<dbReference type="InterPro" id="IPR044330">
    <property type="entry name" value="NSP15_alpha_betaCoV_N"/>
</dbReference>
<dbReference type="InterPro" id="IPR044322">
    <property type="entry name" value="NSP15_M_alpha_beta_CoV"/>
</dbReference>
<dbReference type="InterPro" id="IPR043174">
    <property type="entry name" value="NSP15_middle_sf"/>
</dbReference>
<dbReference type="InterPro" id="IPR042515">
    <property type="entry name" value="NSP15_N_CoV"/>
</dbReference>
<dbReference type="InterPro" id="IPR044401">
    <property type="entry name" value="NSP15_NendoU_CoV"/>
</dbReference>
<dbReference type="InterPro" id="IPR009461">
    <property type="entry name" value="NSP16_CoV-like"/>
</dbReference>
<dbReference type="InterPro" id="IPR021590">
    <property type="entry name" value="NSP1_glob_bCoV"/>
</dbReference>
<dbReference type="InterPro" id="IPR038030">
    <property type="entry name" value="NSP1_glob_sf_bCoV"/>
</dbReference>
<dbReference type="InterPro" id="IPR043615">
    <property type="entry name" value="NSP2_N_CoV"/>
</dbReference>
<dbReference type="InterPro" id="IPR044389">
    <property type="entry name" value="NSP2_SARS-CoV-like"/>
</dbReference>
<dbReference type="InterPro" id="IPR024375">
    <property type="entry name" value="NSP3_bCoV"/>
</dbReference>
<dbReference type="InterPro" id="IPR047567">
    <property type="entry name" value="NSP3_G2M_bCoV"/>
</dbReference>
<dbReference type="InterPro" id="IPR024358">
    <property type="entry name" value="NSP3_N_bCoV"/>
</dbReference>
<dbReference type="InterPro" id="IPR032592">
    <property type="entry name" value="NSP3_NAB_bCoV"/>
</dbReference>
<dbReference type="InterPro" id="IPR042570">
    <property type="entry name" value="NSP3_NAB_bCoV_sf"/>
</dbReference>
<dbReference type="InterPro" id="IPR038166">
    <property type="entry name" value="NSP3_PL2pro_sf_bCoV"/>
</dbReference>
<dbReference type="InterPro" id="IPR038400">
    <property type="entry name" value="NSP3_SUD-M_sf_bCoV"/>
</dbReference>
<dbReference type="InterPro" id="IPR044864">
    <property type="entry name" value="NSP3_SUD-N_bCoV"/>
</dbReference>
<dbReference type="InterPro" id="IPR044374">
    <property type="entry name" value="NSP3_SUD-N_SARS-CoV"/>
</dbReference>
<dbReference type="InterPro" id="IPR043478">
    <property type="entry name" value="NSP3_SUD-N_sf_bCoV"/>
</dbReference>
<dbReference type="InterPro" id="IPR044357">
    <property type="entry name" value="NSP3_Ubl1_dom_CoV"/>
</dbReference>
<dbReference type="InterPro" id="IPR044353">
    <property type="entry name" value="Nsp3_Ubl2_dom_CoV"/>
</dbReference>
<dbReference type="InterPro" id="IPR038083">
    <property type="entry name" value="NSP3A-like"/>
</dbReference>
<dbReference type="InterPro" id="IPR038123">
    <property type="entry name" value="NSP4_C_sf_CoV"/>
</dbReference>
<dbReference type="InterPro" id="IPR044367">
    <property type="entry name" value="NSP6_betaCoV"/>
</dbReference>
<dbReference type="InterPro" id="IPR043610">
    <property type="entry name" value="NSP6_CoV"/>
</dbReference>
<dbReference type="InterPro" id="IPR014828">
    <property type="entry name" value="NSP7_CoV"/>
</dbReference>
<dbReference type="InterPro" id="IPR037204">
    <property type="entry name" value="NSP7_sf_CoV"/>
</dbReference>
<dbReference type="InterPro" id="IPR014829">
    <property type="entry name" value="NSP8_CoV"/>
</dbReference>
<dbReference type="InterPro" id="IPR037230">
    <property type="entry name" value="NSP8_sf_CoV"/>
</dbReference>
<dbReference type="InterPro" id="IPR014822">
    <property type="entry name" value="NSP9_CoV"/>
</dbReference>
<dbReference type="InterPro" id="IPR036499">
    <property type="entry name" value="NSP9_sf_CoV"/>
</dbReference>
<dbReference type="InterPro" id="IPR027417">
    <property type="entry name" value="P-loop_NTPase"/>
</dbReference>
<dbReference type="InterPro" id="IPR013016">
    <property type="entry name" value="Peptidase_C16_CoV"/>
</dbReference>
<dbReference type="InterPro" id="IPR008740">
    <property type="entry name" value="Peptidase_C30_CoV"/>
</dbReference>
<dbReference type="InterPro" id="IPR043477">
    <property type="entry name" value="Peptidase_C30_dom3_CoV"/>
</dbReference>
<dbReference type="InterPro" id="IPR009003">
    <property type="entry name" value="Peptidase_S1_PA"/>
</dbReference>
<dbReference type="InterPro" id="IPR043504">
    <property type="entry name" value="Peptidase_S1_PA_chymotrypsin"/>
</dbReference>
<dbReference type="InterPro" id="IPR043177">
    <property type="entry name" value="PLpro_N_sf_CoV"/>
</dbReference>
<dbReference type="InterPro" id="IPR043503">
    <property type="entry name" value="PLpro_palm_finger_dom_CoV"/>
</dbReference>
<dbReference type="InterPro" id="IPR043178">
    <property type="entry name" value="PLpro_thumb_sf_CoV"/>
</dbReference>
<dbReference type="InterPro" id="IPR046441">
    <property type="entry name" value="RdRp_CoV"/>
</dbReference>
<dbReference type="InterPro" id="IPR009469">
    <property type="entry name" value="RdRp_N_CoV"/>
</dbReference>
<dbReference type="InterPro" id="IPR044351">
    <property type="entry name" value="RdRp_SARS-CoV-like"/>
</dbReference>
<dbReference type="InterPro" id="IPR001205">
    <property type="entry name" value="RNA-dir_pol_C"/>
</dbReference>
<dbReference type="InterPro" id="IPR007094">
    <property type="entry name" value="RNA-dir_pol_PSvirus"/>
</dbReference>
<dbReference type="InterPro" id="IPR018995">
    <property type="entry name" value="RNA_synth_NSP10_CoV"/>
</dbReference>
<dbReference type="InterPro" id="IPR029063">
    <property type="entry name" value="SAM-dependent_MTases_sf"/>
</dbReference>
<dbReference type="PANTHER" id="PTHR43788">
    <property type="entry name" value="DNA2/NAM7 HELICASE FAMILY MEMBER"/>
    <property type="match status" value="1"/>
</dbReference>
<dbReference type="PANTHER" id="PTHR43788:SF16">
    <property type="entry name" value="HELICASE WITH ZINC FINGER 2"/>
    <property type="match status" value="1"/>
</dbReference>
<dbReference type="Pfam" id="PF13087">
    <property type="entry name" value="AAA_12"/>
    <property type="match status" value="1"/>
</dbReference>
<dbReference type="Pfam" id="PF16251">
    <property type="entry name" value="bCoV_NAB"/>
    <property type="match status" value="1"/>
</dbReference>
<dbReference type="Pfam" id="PF11501">
    <property type="entry name" value="bCoV_NSP1"/>
    <property type="match status" value="1"/>
</dbReference>
<dbReference type="Pfam" id="PF12379">
    <property type="entry name" value="bCoV_NSP3_N"/>
    <property type="match status" value="1"/>
</dbReference>
<dbReference type="Pfam" id="PF12124">
    <property type="entry name" value="bCoV_SUD_C"/>
    <property type="match status" value="1"/>
</dbReference>
<dbReference type="Pfam" id="PF11633">
    <property type="entry name" value="bCoV_SUD_M"/>
    <property type="match status" value="1"/>
</dbReference>
<dbReference type="Pfam" id="PF06471">
    <property type="entry name" value="CoV_ExoN"/>
    <property type="match status" value="1"/>
</dbReference>
<dbReference type="Pfam" id="PF06460">
    <property type="entry name" value="CoV_Methyltr_2"/>
    <property type="match status" value="1"/>
</dbReference>
<dbReference type="Pfam" id="PF09401">
    <property type="entry name" value="CoV_NSP10"/>
    <property type="match status" value="1"/>
</dbReference>
<dbReference type="Pfam" id="PF20631">
    <property type="entry name" value="CoV_NSP13_1B"/>
    <property type="match status" value="1"/>
</dbReference>
<dbReference type="Pfam" id="PF20633">
    <property type="entry name" value="CoV_NSP13_stalk"/>
    <property type="match status" value="1"/>
</dbReference>
<dbReference type="Pfam" id="PF20632">
    <property type="entry name" value="CoV_NSP13_ZBD"/>
    <property type="match status" value="1"/>
</dbReference>
<dbReference type="Pfam" id="PF19215">
    <property type="entry name" value="CoV_NSP15_C"/>
    <property type="match status" value="1"/>
</dbReference>
<dbReference type="Pfam" id="PF19216">
    <property type="entry name" value="CoV_NSP15_M"/>
    <property type="match status" value="1"/>
</dbReference>
<dbReference type="Pfam" id="PF19219">
    <property type="entry name" value="CoV_NSP15_N"/>
    <property type="match status" value="1"/>
</dbReference>
<dbReference type="Pfam" id="PF19212">
    <property type="entry name" value="CoV_NSP2_C"/>
    <property type="match status" value="1"/>
</dbReference>
<dbReference type="Pfam" id="PF19211">
    <property type="entry name" value="CoV_NSP2_N"/>
    <property type="match status" value="1"/>
</dbReference>
<dbReference type="Pfam" id="PF19218">
    <property type="entry name" value="CoV_NSP3_C"/>
    <property type="match status" value="1"/>
</dbReference>
<dbReference type="Pfam" id="PF16348">
    <property type="entry name" value="CoV_NSP4_C"/>
    <property type="match status" value="1"/>
</dbReference>
<dbReference type="Pfam" id="PF19217">
    <property type="entry name" value="CoV_NSP4_N"/>
    <property type="match status" value="1"/>
</dbReference>
<dbReference type="Pfam" id="PF19213">
    <property type="entry name" value="CoV_NSP6"/>
    <property type="match status" value="1"/>
</dbReference>
<dbReference type="Pfam" id="PF08716">
    <property type="entry name" value="CoV_NSP7"/>
    <property type="match status" value="1"/>
</dbReference>
<dbReference type="Pfam" id="PF08717">
    <property type="entry name" value="CoV_NSP8"/>
    <property type="match status" value="1"/>
</dbReference>
<dbReference type="Pfam" id="PF08710">
    <property type="entry name" value="CoV_NSP9"/>
    <property type="match status" value="1"/>
</dbReference>
<dbReference type="Pfam" id="PF08715">
    <property type="entry name" value="CoV_peptidase"/>
    <property type="match status" value="1"/>
</dbReference>
<dbReference type="Pfam" id="PF06478">
    <property type="entry name" value="CoV_RPol_N"/>
    <property type="match status" value="1"/>
</dbReference>
<dbReference type="Pfam" id="PF01661">
    <property type="entry name" value="Macro"/>
    <property type="match status" value="1"/>
</dbReference>
<dbReference type="Pfam" id="PF05409">
    <property type="entry name" value="Peptidase_C30"/>
    <property type="match status" value="1"/>
</dbReference>
<dbReference type="Pfam" id="PF00680">
    <property type="entry name" value="RdRP_1"/>
    <property type="match status" value="1"/>
</dbReference>
<dbReference type="SMART" id="SM00506">
    <property type="entry name" value="A1pp"/>
    <property type="match status" value="1"/>
</dbReference>
<dbReference type="SUPFAM" id="SSF144246">
    <property type="entry name" value="Coronavirus NSP10-like"/>
    <property type="match status" value="1"/>
</dbReference>
<dbReference type="SUPFAM" id="SSF140367">
    <property type="entry name" value="Coronavirus NSP7-like"/>
    <property type="match status" value="1"/>
</dbReference>
<dbReference type="SUPFAM" id="SSF143076">
    <property type="entry name" value="Coronavirus NSP8-like"/>
    <property type="match status" value="1"/>
</dbReference>
<dbReference type="SUPFAM" id="SSF56672">
    <property type="entry name" value="DNA/RNA polymerases"/>
    <property type="match status" value="1"/>
</dbReference>
<dbReference type="SUPFAM" id="SSF142877">
    <property type="entry name" value="EndoU-like"/>
    <property type="match status" value="1"/>
</dbReference>
<dbReference type="SUPFAM" id="SSF52949">
    <property type="entry name" value="Macro domain-like"/>
    <property type="match status" value="1"/>
</dbReference>
<dbReference type="SUPFAM" id="SSF159936">
    <property type="entry name" value="NSP3A-like"/>
    <property type="match status" value="1"/>
</dbReference>
<dbReference type="SUPFAM" id="SSF52540">
    <property type="entry name" value="P-loop containing nucleoside triphosphate hydrolases"/>
    <property type="match status" value="1"/>
</dbReference>
<dbReference type="SUPFAM" id="SSF101816">
    <property type="entry name" value="Replicase NSP9"/>
    <property type="match status" value="1"/>
</dbReference>
<dbReference type="SUPFAM" id="SSF53335">
    <property type="entry name" value="S-adenosyl-L-methionine-dependent methyltransferases"/>
    <property type="match status" value="1"/>
</dbReference>
<dbReference type="SUPFAM" id="SSF160099">
    <property type="entry name" value="SARS Nsp1-like"/>
    <property type="match status" value="1"/>
</dbReference>
<dbReference type="SUPFAM" id="SSF50494">
    <property type="entry name" value="Trypsin-like serine proteases"/>
    <property type="match status" value="1"/>
</dbReference>
<dbReference type="PROSITE" id="PS51961">
    <property type="entry name" value="AV_NSP11N_COV_NSP15M"/>
    <property type="match status" value="1"/>
</dbReference>
<dbReference type="PROSITE" id="PS51963">
    <property type="entry name" value="BCOV_NSP1_C"/>
    <property type="match status" value="1"/>
</dbReference>
<dbReference type="PROSITE" id="PS51942">
    <property type="entry name" value="BCOV_NSP3C_C"/>
    <property type="match status" value="1"/>
</dbReference>
<dbReference type="PROSITE" id="PS51941">
    <property type="entry name" value="BCOV_NSP3C_M"/>
    <property type="match status" value="1"/>
</dbReference>
<dbReference type="PROSITE" id="PS51994">
    <property type="entry name" value="BCOV_NSP3E_G2M"/>
    <property type="match status" value="1"/>
</dbReference>
<dbReference type="PROSITE" id="PS51945">
    <property type="entry name" value="BCOV_NSP3E_NAB"/>
    <property type="match status" value="1"/>
</dbReference>
<dbReference type="PROSITE" id="PS51993">
    <property type="entry name" value="COV_3ECTO"/>
    <property type="match status" value="1"/>
</dbReference>
<dbReference type="PROSITE" id="PS51952">
    <property type="entry name" value="COV_EXON_MTASE_COACT"/>
    <property type="match status" value="1"/>
</dbReference>
<dbReference type="PROSITE" id="PS51954">
    <property type="entry name" value="COV_N7_MTASE"/>
    <property type="match status" value="1"/>
</dbReference>
<dbReference type="PROSITE" id="PS51962">
    <property type="entry name" value="COV_NSP1"/>
    <property type="match status" value="1"/>
</dbReference>
<dbReference type="PROSITE" id="PS52000">
    <property type="entry name" value="COV_NSP12_IF"/>
    <property type="match status" value="1"/>
</dbReference>
<dbReference type="PROSITE" id="PS51948">
    <property type="entry name" value="COV_NSP12_RDRP"/>
    <property type="match status" value="1"/>
</dbReference>
<dbReference type="PROSITE" id="PS51960">
    <property type="entry name" value="COV_NSP15_NTD"/>
    <property type="match status" value="1"/>
</dbReference>
<dbReference type="PROSITE" id="PS51991">
    <property type="entry name" value="COV_NSP2_C"/>
    <property type="match status" value="1"/>
</dbReference>
<dbReference type="PROSITE" id="PS51990">
    <property type="entry name" value="COV_NSP2_M"/>
    <property type="match status" value="1"/>
</dbReference>
<dbReference type="PROSITE" id="PS51989">
    <property type="entry name" value="COV_NSP2_N"/>
    <property type="match status" value="1"/>
</dbReference>
<dbReference type="PROSITE" id="PS51992">
    <property type="entry name" value="COV_NSP3_Y"/>
    <property type="match status" value="1"/>
</dbReference>
<dbReference type="PROSITE" id="PS51943">
    <property type="entry name" value="COV_NSP3A_UBL"/>
    <property type="match status" value="1"/>
</dbReference>
<dbReference type="PROSITE" id="PS51944">
    <property type="entry name" value="COV_NSP3D_UBL"/>
    <property type="match status" value="1"/>
</dbReference>
<dbReference type="PROSITE" id="PS51946">
    <property type="entry name" value="COV_NSP4C"/>
    <property type="match status" value="1"/>
</dbReference>
<dbReference type="PROSITE" id="PS51949">
    <property type="entry name" value="COV_NSP7"/>
    <property type="match status" value="1"/>
</dbReference>
<dbReference type="PROSITE" id="PS51950">
    <property type="entry name" value="COV_NSP8"/>
    <property type="match status" value="1"/>
</dbReference>
<dbReference type="PROSITE" id="PS51951">
    <property type="entry name" value="COV_NSP9_SSRNA_BD"/>
    <property type="match status" value="1"/>
</dbReference>
<dbReference type="PROSITE" id="PS51653">
    <property type="entry name" value="CV_ZBD"/>
    <property type="match status" value="1"/>
</dbReference>
<dbReference type="PROSITE" id="PS51442">
    <property type="entry name" value="M_PRO"/>
    <property type="match status" value="1"/>
</dbReference>
<dbReference type="PROSITE" id="PS51154">
    <property type="entry name" value="MACRO"/>
    <property type="match status" value="1"/>
</dbReference>
<dbReference type="PROSITE" id="PS51958">
    <property type="entry name" value="NENDOU"/>
    <property type="match status" value="1"/>
</dbReference>
<dbReference type="PROSITE" id="PS51947">
    <property type="entry name" value="NIRAN"/>
    <property type="match status" value="1"/>
</dbReference>
<dbReference type="PROSITE" id="PS51955">
    <property type="entry name" value="NIV_2_O_MTASE"/>
    <property type="match status" value="1"/>
</dbReference>
<dbReference type="PROSITE" id="PS51953">
    <property type="entry name" value="NIV_EXON"/>
    <property type="match status" value="1"/>
</dbReference>
<dbReference type="PROSITE" id="PS51124">
    <property type="entry name" value="PEPTIDASE_C16"/>
    <property type="match status" value="1"/>
</dbReference>
<dbReference type="PROSITE" id="PS51657">
    <property type="entry name" value="PSRV_HELICASE"/>
    <property type="match status" value="1"/>
</dbReference>
<dbReference type="PROSITE" id="PS50507">
    <property type="entry name" value="RDRP_SSRNA_POS"/>
    <property type="match status" value="1"/>
</dbReference>
<dbReference type="PROSITE" id="PS51940">
    <property type="entry name" value="SARS_NSP3C_N"/>
    <property type="match status" value="1"/>
</dbReference>
<accession>P0C6W2</accession>
<accession>Q3LZX2</accession>
<reference key="1">
    <citation type="journal article" date="2005" name="Proc. Natl. Acad. Sci. U.S.A.">
        <title>Severe acute respiratory syndrome coronavirus-like virus in Chinese horseshoe bats.</title>
        <authorList>
            <person name="Lau S.K.P."/>
            <person name="Woo P.C.Y."/>
            <person name="Li K.S.M."/>
            <person name="Huang Y."/>
            <person name="Tsoi H.-W."/>
            <person name="Wong B.H.L."/>
            <person name="Wong S.S.Y."/>
            <person name="Leung S.-Y."/>
            <person name="Chan K.-H."/>
            <person name="Yuen K.-Y."/>
        </authorList>
    </citation>
    <scope>NUCLEOTIDE SEQUENCE [GENOMIC RNA]</scope>
    <source>
        <strain>Isolate HKU3-1</strain>
    </source>
</reference>
<keyword id="KW-1072">Activation of host autophagy by virus</keyword>
<keyword id="KW-0067">ATP-binding</keyword>
<keyword id="KW-1132">Decay of host mRNAs by virus</keyword>
<keyword id="KW-1015">Disulfide bond</keyword>
<keyword id="KW-0255">Endonuclease</keyword>
<keyword id="KW-1262">Eukaryotic host gene expression shutoff by virus</keyword>
<keyword id="KW-1193">Eukaryotic host translation shutoff by virus</keyword>
<keyword id="KW-0269">Exonuclease</keyword>
<keyword id="KW-0347">Helicase</keyword>
<keyword id="KW-1035">Host cytoplasm</keyword>
<keyword id="KW-1190">Host gene expression shutoff by virus</keyword>
<keyword id="KW-1043">Host membrane</keyword>
<keyword id="KW-1192">Host mRNA suppression by virus</keyword>
<keyword id="KW-0945">Host-virus interaction</keyword>
<keyword id="KW-0378">Hydrolase</keyword>
<keyword id="KW-1090">Inhibition of host innate immune response by virus</keyword>
<keyword id="KW-1114">Inhibition of host interferon signaling pathway by virus</keyword>
<keyword id="KW-1095">Inhibition of host ISG15 by virus</keyword>
<keyword id="KW-1100">Inhibition of host NF-kappa-B by virus</keyword>
<keyword id="KW-0922">Interferon antiviral system evasion</keyword>
<keyword id="KW-0456">Lyase</keyword>
<keyword id="KW-0464">Manganese</keyword>
<keyword id="KW-0472">Membrane</keyword>
<keyword id="KW-0479">Metal-binding</keyword>
<keyword id="KW-0489">Methyltransferase</keyword>
<keyword id="KW-1127">Modulation of host ubiquitin pathway by viral deubiquitinase</keyword>
<keyword id="KW-1130">Modulation of host ubiquitin pathway by virus</keyword>
<keyword id="KW-0540">Nuclease</keyword>
<keyword id="KW-0547">Nucleotide-binding</keyword>
<keyword id="KW-0548">Nucleotidyltransferase</keyword>
<keyword id="KW-0645">Protease</keyword>
<keyword id="KW-0677">Repeat</keyword>
<keyword id="KW-0688">Ribosomal frameshifting</keyword>
<keyword id="KW-0694">RNA-binding</keyword>
<keyword id="KW-0696">RNA-directed RNA polymerase</keyword>
<keyword id="KW-0788">Thiol protease</keyword>
<keyword id="KW-0808">Transferase</keyword>
<keyword id="KW-0812">Transmembrane</keyword>
<keyword id="KW-1133">Transmembrane helix</keyword>
<keyword id="KW-0833">Ubl conjugation pathway</keyword>
<keyword id="KW-0899">Viral immunoevasion</keyword>
<keyword id="KW-0693">Viral RNA replication</keyword>
<keyword id="KW-0862">Zinc</keyword>
<keyword id="KW-0863">Zinc-finger</keyword>
<proteinExistence type="inferred from homology"/>
<sequence length="7067" mass="789496">MESLVLGVNEKTHVQLSLPVLQVRDVLVRGFGDSVEEALSEAREHLKNGTCGLVELEKGVLPQLEQPYVFIKRSDALSTNHGHKVVELVAELDGIQFGRSGITLGVLVPHVGETPIAYRNVLLRKNGNKGAGGHSFGIDLKSYDLGDELGTDPIEDYEQNWNTKHGSGALRELTRELNGGVVTRYVDNNFCGPDGYPLECIKDFLARAGKSMCTLSEQLDYIESKRGVYCCREHEHEIVWFTERSEKSYEHQTPFEIKSAKKFDTFKGECPKFVFPLNSKVKVIQPRVEKKKTEGFMGRIRSVYPVATPQECNDMHLSTLMKCNHCDEVSWQTCDFLKATCEQCGTENLVCEGPTTCGYLPTNAVVKMPCPACQDPEVGPEHSVADYHNHSNIETRLRKGGRTKCFGGCVFSYVGCYNKRAYWVPRASANIGANHTGITGENVETLNEDLLEILNRERVNINIVGDFRFNEEVAIILASFSASPSAFIETVKGLDYKSFKVIVESCGNYKVTNGKPVTGAWNIGQQRSILTPLCGFPSQAAGVIRSIFSRTLDAANHSILDLQRAAVTTLDGISEQSLRLVDAMVYTSDLLTNSVVVMAYVTGGLVQQTMQWLSNMLGTAVDKLKPVFTWVEAKLSAGVEFLRDAWEILKFLITGVFDVIKGQIQVATDNIKECVKIFLGVVNKALEMCLDQVTIAGTKLRALNLGEVFIAQSRGLYRQCIRGKEQLQLLMPLKAPKEVTFLEGDAHDTVLTSEEVVLKSGELEALETPIDSFTSGAVVGTPVCINGLMLLELENKEQYCALSPGLLATNNVFRLKGGAPVKGVTFGEDTVLEVQGYKNVKITFELDVRVDKVLNEKCSVYTVESGTEVTEFACVVAEAVVKTLQPVSDLLTPMGIDLDEWSVATFYLFDDAGEEKLSSRMYCSFYPPDEEEDCEECEDEEETCEHEYGTEDDYKGLPLEFGASTETPHVEEEEEEEDWLDDAIEAEPEPEPLPEEPVNQFVGYLKLTDNVAIKCIDIVKEAQSAKPTVIVNAANTHLKHGGGVAGALNKATNGAMQNESDEYIRQNGPLTVGGSCLLSGHNLAEKCLHVVGPNLNAGEDVQLLKRAYENFNSQDVLLAPLLSAGIFGAKPLQSLKMCVEIVRTQVYLAVNDKSLYDQIVLDYLDSLKPKVESPNKEEEPKLEEPKAVQPVAEKPVDVKPKIKACIDEVTTTLEETKFLTNKLLLFADINGKLYQDSQNMLRGEDMSFLEKDAPYIVGDVITSGDITCVIIPAKKSGGTTEMLARALKEVPVAEYITTYPGQGCAGYTLEEAKTALKKCKSAFYVLPSETPNEKEEVLGTVSWNLREMLAHAEETRKLMPICLDVRAIMATIQRKYKGIKVQEGIVDYGVRFFFYTSKEPVASIITKLNSLNEPLVTMPIGYVTHGLNLEEAARCMRSLKAPAVVSVSSPDAVTAYNGYLTSSSKTPEEYFVETTSLAGSYRDWSYSGQRTELGVEFLKRGDKIVYHTTGSPIEFHLDGEVLPLDKLKSLLSLREVKTIKVFTTVDNTNLHTHIVDMSMTYGQQFGPTYLDGADVTKIKPHVNHEGKTFFVLPSDDTLRSEAFEYYHTIDESFLGRYMSALNHTKKWKFPQVGGLTSIKWADNNCYLSSVLLALQQVEVKFNAPALQEAYYRARAGDAANFCALILAYSNKTVGELGDVRETMTHLLQHANLESAKRVLNVVCKHCGQKTTTLKGVEAVMYMGTLSYDELKTGVSIPCVCGRNATQYLVQQESSFVMMSAPPAEYKLQQGAFLCANEYTGNYQCGHYTHITAKETLYRVDGAHLTKMSEYKGPVTDVFYKETSYTTAIKPVSYKLDGVTYTEIEPKLDGYYKKGNAYYTEQPIDLVPTQPMPNASFDNFKLTCSNTKFADDLNQMTGFKKPASRELTVTFFPDLNGDVVAIDYRHYSTSFKKGAKLVHKPILWHINQTTNKTTYKPNIWCLRCLWSTKPVDTSNSFEVLVVEDTQGMDNLACESQTTTSEEVVENPTVQKEIIECDVKTTEVVGNVILKPSEEGVKVTQELGHEDLMAAYVEETSITIKKPNELSLALGLKTLATHGAAAINSVPWSKILAYVKPFLGQTAVITSNCIKKCVQRVFSNYMPYVITLLFQLCTFTKSTNSRIKASLPTTIAKNSVKSVAKLCLDVCINYVKSPKFSKLFTIVMWLLLLSICLGSLTYVTAVLGVCLSSLGVPSYCDGVRELYINSSNVTTMDFCQGYFPCSVCLSGLDSLDSYPALETIQVTISSYKLDLTFLGLAAEWLLAYMLFTKFFYLLGLSAIMQAFFGYFASHFISNSWLMWFIISIVQMAPVSAMVRMYIFFASFYYVWKSYVHIMDGCTSSTCMMCYKRNRATRVECTTIVNGVKRSFYVYANGGRGFCKAHNWNCLNCDTFCAGSTFISDEVARDLSLQFKRPINPTDQSAYVVDSVTVKNGALHLYFDKAGQKTYERHPLSHFVNLDNLRANNTKGSLPINVIVFDGKSKCEESAAKSASVYYSQLMCQPILLLDQALVSDVGDSTEVSVKMFDAYVDTFSATFSVPMEKLKALVATAHSELAKGVALDGVLSTFVSAARQGVVDTDVDTKDVIECLKLSHHSDIEVTGDSCNNFMLTYNKVENMTPRDLGACIDCNARHINAQVAKSHNVSLVWNVKDYMSLSEQLRKQIRSAAKKNNIPFRLTCATTRQVVNVITTKISLKGGKVVSTWFKLLLKVTLLCVLAALFCYVIMPVHSLSVHDGYTNEIIGYKAIQDGVTRDIVSTDDCFANKHAGFDSWFSQRGGSYRNDKNCPVVAAIITREIGFIVPGLPGTVLRALNGDFLHFLPRVFSAVGNICYTPSKLIEYSDFATSACVLAAECTIFKDAMGKPVPYCYDTNLLEGSISYSELRPDTRYVLMDGSIIQFPNTYLEGSVRVVTTFDAEYCRHGTCERSEVGVCLSTSGRWVLNNEHYRALPGVFCGVDAMNLIANIFTPLVQPVGALDVSASVVAGGIIAILVTCAAYYFMKFRRAFGEYNHVVAANALLFLMSFTILCLAPAYSFLPGVYSIFYLYLTFYFTNDVSFLAHLQWFAMFSPIVPFWITAIYVFCISLKHFHWFFSNYLKKRVMFNGVTFSTFEEAALCTFLLNKEMYLRLRSETLLPLTQYNRYLALYNKYKYFSGALDTTSYREAACCHLAKALNDFSNSGADVLYQPPQTSITSAVLQSGFRKMAFPSGKVEGCMVQVTCGTTTLNGLWLDDTVYCPRHVVCTAEDMLNPNYDDLLIRKSNHSFLVQAGNVQLRVIGHSMQNCLLRLKVDTSNPKTPKYKFVRIQPGQTFSVLACYNGSPSGVYQCAMRPNHTIKGSFLNGSCGSVGFNIDYDCVSFCYMHHMELPTGVHAGTDLEGKFYGPFVDRQTAQAAGTDTTITLNVLAWLYAAVINGDRWFLNRFTTTLNDFNLVAMKYNYEPLTQDHVDILGPLSAQTGIAVLDMCAALKELLQNGMNGRTILGSTILEDEFTPFDVVRQCSGVTFQGKFKKIVKGTHHWMLLTFLTSLLILVQSTQWSLFFFVYENAFLPFALGIMAVAACAMLLVKHKHAFLCLFLLPSLATVAYFNMVYMPASWVMRIMTWLELADTSLSGYRLKDCVMYASALVLLILMTARTVYDDAARRVWTLMNVITLVYKVYYGNSLDQAISMWALVISVTSNYSGVVTTIMFLARAIVFVCVEYYPLLFITGNTLQCIMLVYCFLGYCCCCYFGLFCLLNRYFRLTLGVYDYLVSTQEFRYMNSQGLLPPKSSIDAFKLNIKLLGIGGKPCIKVATVQSKMSDVKCTSVVLLSVLQQLRVESSSKLWAQCVQLHNDILLAKDTTEAFEKMVSLLSVLLSMQGAVDINKLCEEMLDNRATLQAIASEFSSLPSYAAYATAQEAYEQAVSNGDSEVVLKKLKKSLNVAKSEFDHDAAMQRKLEKMADQAMTQMYKQARSEDKRAKVTSAMQTMLFTMLRKLDNDALNNIINNARDGCVPLNIIPLTTAAKLMVVVPDYGTYKNTCDGNTFTYASALWEIQQVVDADSKIVQLSEINMDNSPNLAWPLIVTALRANSAVKLQNNELSPVALRQMSCAAGTTQTACTDDNALAYYNNAKGGRFVLALLSDHQDLKWARFPKSDGTGTIYTELEPPCRFVTDTPKGPKVKYLYFIKGLNNLNRGMVLGSLAATVRLQAGNATEVPANSTVLSFCAFAVDPAKAYKDYLASGGQPITNCVKMLCTHTGTGQAITVTPEANMDQESFGGASCCLYCRCHIDHPNPKGFCDLKGKYVQIPTTCANDPVGFTLRNTVCTVCGMWKGYGCSCDQLREPMMQSADASTFLNRVCGVSAARLTPCGTGTSTDVVYRAFDIYNEKVAGFAKFLKTNCCRFQEKDEEGNLLDSYFVVKRHTMSNYQHEETIYNLIKECPAVAVHDFFKFRVDGDMVPHISRQRLTKYTMADLVYALRHFDEGNCDTLKEILVTYNCCDDNYFNKKDWYDFVENPDVLRVYANLGERVRRALLKTVQFCDAMRDAGIVGVLTLDNQDLNGNWYDFGDFVQVAPGCGVPIVDSYYSLLMPILTLTKALAAESHMDADLAKPLVKWDLLKYDFTEERLCLFDRYFKYWDQTYHPNCINCLDDRCILHCANFNVLFSTVFPPTSFGPLVRKIFVDGVPFVVSTGYHFRELGVVHNQDVNLHSSRLSFKELLVYAADPAMHAASGNLLLDKRTTCFSVAALTNNVAFQTVKPGNFNKDFYDFAVSKGFFKEGSSVELKHFFFAQDGNAAISDYDYYRYNLPTMCDIRQLLFVVEVVDKYFDCYDGGCINANQVIVNNLDKSAGFPFNKWGKARLYYDSMSYEDQDALFAYTKRNVIPTITQMNLKYAISAKNRARTVAGVSICSTMTNRQFHQKLLKSIAATRGATVVIGTSKFYGGWHNMLKTVYSDVESPHLMGWDYPKCDRAMPNMLRIMASLILARKHSTCCNLSHRFYRLANECAQVLSEMVMCGGSLYVKPGGTSSGDATTAYANSVFNICQAVTANVNALLSTDGNKIADKYVRNLQHRLYECLYRNRDVDHEFVDEFYAYLRKHFSMMILSDDAVVCYNSNYAAQGLVASIKNFKAVLYYQNNVFMSEAKCWTETDLTRGPHEFCSQHTMLVKQGDDYVYLPYPDPSRILGAGCFVDDIVKTDGTLMIERFVSLAIDAYPLTKHPNQEYADVFHLYLQYIRKLHDELTGHMLDMYSVMLTNDNTSRYWEPEFYEAMYTPHTVLQAVGACVLCNSQTSLRCGACIRRPFLCCKCCYDHVISTSHKLVLSVNPYVCNAPGCDVTDVTQLYLGGMSYYCKSHKPPISFPLCANGQVFGLYKNTCVGSDNVTDFNAIATCDWTNAGDYILANTCTERLKLFAAETLKATEETFKLSYGIATVREVLSDRELYLSWEVGKPRPPLNRNYVFTGYRVTKNSKVQIGEYTFEKGDYGDAVVYRGTTTYKLNVGDYFVLTSHTVMPLSAPTLVPQEHYVRITGLYPTLNISNEFSSNVANYQKIGMQKYSTLQGPPGTGKSHFAIGLALYYPSARIVYTACSHAAVDALCEKALKYLPIDKCSRIIPARARVECFDKFKVNSTLEQYVFCTVNALPETTADIVVFDEISMATNYDLSVVNARLRAKHYVYIGDPAQLPAPRTLLTKGTLEPEYFNSVCRLMKTIGPDMFLGTCRRCPAEIVDTVSALVYDNKLKAHKEKSAQCFKMYYKGVITHDVSSAINRPQIGVVREFLTRNPAWRKAVFISPYNSQNAVASKILGLPTQTVDSSQGSEYDYVIFTQTTETAHSCNVNRFNVAITRAKIGILCIMSDRDLYDKLQFTSLEVPRRNVATLQAENVTGLFKDCSKIITGLHPTQAPTHLSVDTKFKTEGLCVDIPGIPKDMTYRRLISMMGFKMNYQVNGYPNMFITREEAIRHVRAWIGFDVEGCHATRDAVGTNLPLQLGFSTGVNLVAVPTGYVDTENSTEFTRVNAKPPPGDQFKHLIPLMYKGLPWNVVRIKIVQMLSDTLKGLSDRVVFVLWAHGFELTSMKYFVKIGPERTCCLCDKRATCFSTSSDTYACWNHSVGFDYVYNPFMIDVQQWGFTGNLQSNHDQHCQVHGNAHVASCDAIMTRCLAVHECFVKRVDWSVEYPIIGDELKINAACRKVQHMVVKSALLADKFTVLHDIGNPKAIRCVPQAEVDWKFYDAQPCSDKAYKIEELFYSYATHHDKFTDGVCLFWNCNVDRYPANAIVCRFDTRVLSNLNLPGCDGGSLYVNKHAFHTPAFDKSAFTHLKQLPFFYYSDSPCESHGKQVVSDIDYVPLKSATCITRCNLGGAVCRHHANEYRQYLDAYNMMISAGFSLWIYKQFDTYNLWNTFTKLQSLENVAYNVVNKGHFDGQSGEAPVSIINNAVYTKVDGIDVEIFENKTTLPVNVAFELWAKRNIKPVPEIKILNNLGVDIAANNVIWDYKREAPAHVSTIGVCTMTDIAKKPTESACSSLIVLFDGRVEGQVDFFRNARNGVLITEGSVKGLTPSKGPAQASVNGVTLIGESVKTQFNYFKKVDGIIQQLPETYFTQSRDLEDFKPRSQMETDFLELAMDEFIQRYKLEGYAFEHIVYGDFSHGQLGGLHLMIGLAKRSQDSLLKLEDFIPMDSTVKNYFITDAQTGSSKCVCSVIDLLLDDFVEIIKSQDLSVVSKVVKVTIDYAEISFMLWCKDGHVETFYPKLQASQAWQPGVAMPNLYKMQRMLLEKCDLQNYGENAVIPKGIMMNVAKYTQLCQYLNTLTLAVPYNMRVIHFGAGSDKGVAPGTAVLRQWLPTGTLLVDSDLNDFVSDADSTLIGDCATVHTANKWDLIISDMYDPKTKHVLKDNDSKEGFFTYLCGFIKQKLALGGSVAVKITEHSWNADLYKLMGHFSWWTAFVTNVNASSSEAFLIGVNYLGKPKEQIDGYTMHANYIFWRNTNPIQLSSYSLFDMSKFPLKLRGTAVMSLKENQINDMIYSLLEKGRLIIRENNRVVVSSDILVNN</sequence>
<protein>
    <recommendedName>
        <fullName>Replicase polyprotein 1ab</fullName>
        <shortName>pp1ab</shortName>
    </recommendedName>
    <alternativeName>
        <fullName>ORF1ab polyprotein</fullName>
    </alternativeName>
    <component>
        <recommendedName>
            <fullName>Host translation inhibitor nsp1</fullName>
            <shortName>nsp1</shortName>
        </recommendedName>
        <alternativeName>
            <fullName>Leader protein</fullName>
        </alternativeName>
    </component>
    <component>
        <recommendedName>
            <fullName>Non-structural protein 2</fullName>
            <shortName>nsp2</shortName>
        </recommendedName>
        <alternativeName>
            <fullName>p65 homolog</fullName>
        </alternativeName>
    </component>
    <component>
        <recommendedName>
            <fullName>Papain-like proteinase nsp3</fullName>
            <shortName>PL-PRO</shortName>
            <ecNumber>3.4.19.12</ecNumber>
            <ecNumber>3.4.22.-</ecNumber>
        </recommendedName>
        <alternativeName>
            <fullName>Non-structural protein 3</fullName>
            <shortName>nsp3</shortName>
        </alternativeName>
    </component>
    <component>
        <recommendedName>
            <fullName>Non-structural protein 4</fullName>
            <shortName>nsp4</shortName>
        </recommendedName>
    </component>
    <component>
        <recommendedName>
            <fullName>3C-like proteinase nsp5</fullName>
            <shortName>3CL-PRO</shortName>
            <shortName>3CLp</shortName>
            <ecNumber>3.4.22.-</ecNumber>
        </recommendedName>
        <alternativeName>
            <fullName>nsp5</fullName>
        </alternativeName>
    </component>
    <component>
        <recommendedName>
            <fullName>Non-structural protein 6</fullName>
            <shortName>nsp6</shortName>
        </recommendedName>
    </component>
    <component>
        <recommendedName>
            <fullName>Non-structural protein 7</fullName>
            <shortName>nsp7</shortName>
        </recommendedName>
    </component>
    <component>
        <recommendedName>
            <fullName>Non-structural protein 8</fullName>
            <shortName>nsp8</shortName>
        </recommendedName>
    </component>
    <component>
        <recommendedName>
            <fullName>Viral protein genome-linked nsp9</fullName>
        </recommendedName>
        <alternativeName>
            <fullName>Non-structural protein 9</fullName>
            <shortName>nsp9</shortName>
        </alternativeName>
        <alternativeName>
            <fullName>RNA-capping enzyme subunit nsp9</fullName>
        </alternativeName>
        <alternativeName>
            <fullName>p12</fullName>
        </alternativeName>
    </component>
    <component>
        <recommendedName>
            <fullName>Non-structural protein 10</fullName>
            <shortName>nsp10</shortName>
        </recommendedName>
        <alternativeName>
            <fullName>Growth factor-like peptide</fullName>
            <shortName>GFL</shortName>
        </alternativeName>
    </component>
    <component>
        <recommendedName>
            <fullName>RNA-directed RNA polymerase nsp12</fullName>
            <shortName>Pol</shortName>
            <shortName>RdRp</shortName>
            <ecNumber>2.7.7.48</ecNumber>
            <ecNumber>2.7.7.50</ecNumber>
        </recommendedName>
        <alternativeName>
            <fullName>nsp12</fullName>
        </alternativeName>
    </component>
    <component>
        <recommendedName>
            <fullName>Helicase nsp13</fullName>
            <shortName>Hel</shortName>
            <ecNumber>3.6.4.12</ecNumber>
            <ecNumber>3.6.4.13</ecNumber>
        </recommendedName>
        <alternativeName>
            <fullName>nsp13</fullName>
        </alternativeName>
    </component>
    <component>
        <recommendedName>
            <fullName>Guanine-N7 methyltransferase nsp14</fullName>
            <shortName>ExoN</shortName>
            <ecNumber>2.1.1.56</ecNumber>
            <ecNumber>3.1.13.-</ecNumber>
        </recommendedName>
        <alternativeName>
            <fullName>nsp14</fullName>
        </alternativeName>
    </component>
    <component>
        <recommendedName>
            <fullName>Uridylate-specific endoribonuclease nsp15</fullName>
            <ecNumber>4.6.1.-</ecNumber>
        </recommendedName>
        <alternativeName>
            <fullName>NendoU</fullName>
        </alternativeName>
        <alternativeName>
            <fullName>nsp15</fullName>
        </alternativeName>
    </component>
    <component>
        <recommendedName>
            <fullName>2'-O-methyltransferase nsp16</fullName>
            <ecNumber>2.1.1.57</ecNumber>
        </recommendedName>
        <alternativeName>
            <fullName>nsp16</fullName>
        </alternativeName>
    </component>
</protein>
<gene>
    <name type="primary">rep</name>
    <name type="ORF">1a-1b</name>
</gene>